<dbReference type="EC" id="2.1.1.319" evidence="7 8 20 23 26 31"/>
<dbReference type="EMBL" id="Y10805">
    <property type="protein sequence ID" value="CAA71763.1"/>
    <property type="molecule type" value="mRNA"/>
</dbReference>
<dbReference type="EMBL" id="Y10806">
    <property type="protein sequence ID" value="CAA71764.1"/>
    <property type="status" value="ALT_INIT"/>
    <property type="molecule type" value="mRNA"/>
</dbReference>
<dbReference type="EMBL" id="Y10807">
    <property type="protein sequence ID" value="CAA71765.1"/>
    <property type="status" value="ALT_INIT"/>
    <property type="molecule type" value="mRNA"/>
</dbReference>
<dbReference type="EMBL" id="D66904">
    <property type="protein sequence ID" value="BAA11029.1"/>
    <property type="status" value="ALT_INIT"/>
    <property type="molecule type" value="mRNA"/>
</dbReference>
<dbReference type="EMBL" id="AF222689">
    <property type="protein sequence ID" value="AAF62893.1"/>
    <property type="molecule type" value="Genomic_DNA"/>
</dbReference>
<dbReference type="EMBL" id="AF222689">
    <property type="protein sequence ID" value="AAF62894.1"/>
    <property type="status" value="ALT_INIT"/>
    <property type="molecule type" value="Genomic_DNA"/>
</dbReference>
<dbReference type="EMBL" id="AF222689">
    <property type="protein sequence ID" value="AAF62895.1"/>
    <property type="status" value="ALT_INIT"/>
    <property type="molecule type" value="Genomic_DNA"/>
</dbReference>
<dbReference type="EMBL" id="AK304660">
    <property type="protein sequence ID" value="BAG65435.1"/>
    <property type="molecule type" value="mRNA"/>
</dbReference>
<dbReference type="EMBL" id="CR407608">
    <property type="protein sequence ID" value="CAG28536.1"/>
    <property type="molecule type" value="mRNA"/>
</dbReference>
<dbReference type="EMBL" id="AC011495">
    <property type="status" value="NOT_ANNOTATED_CDS"/>
    <property type="molecule type" value="Genomic_DNA"/>
</dbReference>
<dbReference type="EMBL" id="CH471177">
    <property type="protein sequence ID" value="EAW52521.1"/>
    <property type="molecule type" value="Genomic_DNA"/>
</dbReference>
<dbReference type="EMBL" id="CH471177">
    <property type="protein sequence ID" value="EAW52519.1"/>
    <property type="molecule type" value="Genomic_DNA"/>
</dbReference>
<dbReference type="EMBL" id="BC019268">
    <property type="protein sequence ID" value="AAH19268.2"/>
    <property type="molecule type" value="mRNA"/>
</dbReference>
<dbReference type="EMBL" id="BC109282">
    <property type="protein sequence ID" value="AAI09283.2"/>
    <property type="status" value="ALT_INIT"/>
    <property type="molecule type" value="mRNA"/>
</dbReference>
<dbReference type="EMBL" id="BC109283">
    <property type="protein sequence ID" value="AAI09284.2"/>
    <property type="status" value="ALT_INIT"/>
    <property type="molecule type" value="mRNA"/>
</dbReference>
<dbReference type="CCDS" id="CCDS42592.1">
    <molecule id="Q99873-3"/>
</dbReference>
<dbReference type="CCDS" id="CCDS46145.1">
    <molecule id="Q99873-1"/>
</dbReference>
<dbReference type="CCDS" id="CCDS74425.1">
    <molecule id="Q99873-5"/>
</dbReference>
<dbReference type="RefSeq" id="NP_001193971.1">
    <molecule id="Q99873-5"/>
    <property type="nucleotide sequence ID" value="NM_001207042.3"/>
</dbReference>
<dbReference type="RefSeq" id="NP_001527.3">
    <molecule id="Q99873-1"/>
    <property type="nucleotide sequence ID" value="NM_001536.5"/>
</dbReference>
<dbReference type="RefSeq" id="NP_938074.2">
    <molecule id="Q99873-3"/>
    <property type="nucleotide sequence ID" value="NM_198318.5"/>
</dbReference>
<dbReference type="RefSeq" id="XP_016882223.1">
    <property type="nucleotide sequence ID" value="XM_017026734.1"/>
</dbReference>
<dbReference type="RefSeq" id="XP_016882224.1">
    <molecule id="Q99873-2"/>
    <property type="nucleotide sequence ID" value="XM_017026735.2"/>
</dbReference>
<dbReference type="RefSeq" id="XP_054176785.1">
    <molecule id="Q99873-2"/>
    <property type="nucleotide sequence ID" value="XM_054320810.1"/>
</dbReference>
<dbReference type="PDB" id="6NT2">
    <property type="method" value="X-ray"/>
    <property type="resolution" value="2.48 A"/>
    <property type="chains" value="A/B/C/D=1-371"/>
</dbReference>
<dbReference type="PDBsum" id="6NT2"/>
<dbReference type="SMR" id="Q99873"/>
<dbReference type="BioGRID" id="109512">
    <property type="interactions" value="934"/>
</dbReference>
<dbReference type="CORUM" id="Q99873"/>
<dbReference type="DIP" id="DIP-30878N"/>
<dbReference type="FunCoup" id="Q99873">
    <property type="interactions" value="3585"/>
</dbReference>
<dbReference type="IntAct" id="Q99873">
    <property type="interactions" value="169"/>
</dbReference>
<dbReference type="MINT" id="Q99873"/>
<dbReference type="STRING" id="9606.ENSP00000406162"/>
<dbReference type="BindingDB" id="Q99873"/>
<dbReference type="ChEMBL" id="CHEMBL5524"/>
<dbReference type="DrugBank" id="DB01752">
    <property type="generic name" value="S-adenosyl-L-homocysteine"/>
</dbReference>
<dbReference type="DrugCentral" id="Q99873"/>
<dbReference type="GuidetoPHARMACOLOGY" id="1252"/>
<dbReference type="GlyGen" id="Q99873">
    <property type="glycosylation" value="1 site, 1 O-linked glycan (1 site)"/>
</dbReference>
<dbReference type="iPTMnet" id="Q99873"/>
<dbReference type="PhosphoSitePlus" id="Q99873"/>
<dbReference type="SwissPalm" id="Q99873"/>
<dbReference type="BioMuta" id="PRMT1"/>
<dbReference type="DMDM" id="161789011"/>
<dbReference type="jPOST" id="Q99873"/>
<dbReference type="MassIVE" id="Q99873"/>
<dbReference type="PaxDb" id="9606-ENSP00000406162"/>
<dbReference type="PeptideAtlas" id="Q99873"/>
<dbReference type="ProteomicsDB" id="33891"/>
<dbReference type="ProteomicsDB" id="44996"/>
<dbReference type="ProteomicsDB" id="78511">
    <molecule id="Q99873-1"/>
</dbReference>
<dbReference type="ProteomicsDB" id="78512">
    <molecule id="Q99873-2"/>
</dbReference>
<dbReference type="ProteomicsDB" id="78513">
    <molecule id="Q99873-3"/>
</dbReference>
<dbReference type="Pumba" id="Q99873"/>
<dbReference type="Antibodypedia" id="18668">
    <property type="antibodies" value="543 antibodies from 41 providers"/>
</dbReference>
<dbReference type="DNASU" id="3276"/>
<dbReference type="Ensembl" id="ENST00000391851.8">
    <molecule id="Q99873-3"/>
    <property type="protein sequence ID" value="ENSP00000375724.4"/>
    <property type="gene ID" value="ENSG00000126457.22"/>
</dbReference>
<dbReference type="Ensembl" id="ENST00000454376.7">
    <molecule id="Q99873-1"/>
    <property type="protein sequence ID" value="ENSP00000406162.2"/>
    <property type="gene ID" value="ENSG00000126457.22"/>
</dbReference>
<dbReference type="Ensembl" id="ENST00000610806.4">
    <molecule id="Q99873-5"/>
    <property type="protein sequence ID" value="ENSP00000484505.1"/>
    <property type="gene ID" value="ENSG00000126457.22"/>
</dbReference>
<dbReference type="GeneID" id="3276"/>
<dbReference type="KEGG" id="hsa:3276"/>
<dbReference type="MANE-Select" id="ENST00000454376.7">
    <property type="protein sequence ID" value="ENSP00000406162.2"/>
    <property type="RefSeq nucleotide sequence ID" value="NM_001536.6"/>
    <property type="RefSeq protein sequence ID" value="NP_001527.3"/>
</dbReference>
<dbReference type="UCSC" id="uc002ppe.4">
    <molecule id="Q99873-1"/>
    <property type="organism name" value="human"/>
</dbReference>
<dbReference type="UCSC" id="uc010enf.3">
    <property type="organism name" value="human"/>
</dbReference>
<dbReference type="AGR" id="HGNC:5187"/>
<dbReference type="CTD" id="3276"/>
<dbReference type="DisGeNET" id="3276"/>
<dbReference type="GeneCards" id="PRMT1"/>
<dbReference type="HGNC" id="HGNC:5187">
    <property type="gene designation" value="PRMT1"/>
</dbReference>
<dbReference type="HPA" id="ENSG00000126457">
    <property type="expression patterns" value="Low tissue specificity"/>
</dbReference>
<dbReference type="MIM" id="602950">
    <property type="type" value="gene"/>
</dbReference>
<dbReference type="neXtProt" id="NX_Q99873"/>
<dbReference type="OpenTargets" id="ENSG00000126457"/>
<dbReference type="PharmGKB" id="PA29461"/>
<dbReference type="VEuPathDB" id="HostDB:ENSG00000126457"/>
<dbReference type="eggNOG" id="KOG1499">
    <property type="taxonomic scope" value="Eukaryota"/>
</dbReference>
<dbReference type="GeneTree" id="ENSGT00940000154700"/>
<dbReference type="InParanoid" id="Q99873"/>
<dbReference type="OMA" id="QAMMEPI"/>
<dbReference type="OrthoDB" id="7848332at2759"/>
<dbReference type="PAN-GO" id="Q99873">
    <property type="GO annotations" value="2 GO annotations based on evolutionary models"/>
</dbReference>
<dbReference type="PhylomeDB" id="Q99873"/>
<dbReference type="TreeFam" id="TF300608"/>
<dbReference type="BioCyc" id="MetaCyc:HS05019-MONOMER"/>
<dbReference type="BRENDA" id="2.1.1.319">
    <property type="organism ID" value="2681"/>
</dbReference>
<dbReference type="PathwayCommons" id="Q99873"/>
<dbReference type="Reactome" id="R-HSA-3214858">
    <property type="pathway name" value="RMTs methylate histone arginines"/>
</dbReference>
<dbReference type="Reactome" id="R-HSA-6804114">
    <property type="pathway name" value="TP53 Regulates Transcription of Genes Involved in G2 Cell Cycle Arrest"/>
</dbReference>
<dbReference type="Reactome" id="R-HSA-8936459">
    <property type="pathway name" value="RUNX1 regulates genes involved in megakaryocyte differentiation and platelet function"/>
</dbReference>
<dbReference type="Reactome" id="R-HSA-9009391">
    <property type="pathway name" value="Extra-nuclear estrogen signaling"/>
</dbReference>
<dbReference type="Reactome" id="R-HSA-9018519">
    <property type="pathway name" value="Estrogen-dependent gene expression"/>
</dbReference>
<dbReference type="Reactome" id="R-HSA-9694631">
    <property type="pathway name" value="Maturation of nucleoprotein"/>
</dbReference>
<dbReference type="SABIO-RK" id="Q99873"/>
<dbReference type="SignaLink" id="Q99873"/>
<dbReference type="SIGNOR" id="Q99873"/>
<dbReference type="BioGRID-ORCS" id="3276">
    <property type="hits" value="818 hits in 1192 CRISPR screens"/>
</dbReference>
<dbReference type="CD-CODE" id="2CF52CF0">
    <property type="entry name" value="Synthetic Condensate 000015"/>
</dbReference>
<dbReference type="CD-CODE" id="DEE660B4">
    <property type="entry name" value="Stress granule"/>
</dbReference>
<dbReference type="ChiTaRS" id="PRMT1">
    <property type="organism name" value="human"/>
</dbReference>
<dbReference type="GeneWiki" id="PRMT1"/>
<dbReference type="GenomeRNAi" id="3276"/>
<dbReference type="Pharos" id="Q99873">
    <property type="development level" value="Tchem"/>
</dbReference>
<dbReference type="PRO" id="PR:Q99873"/>
<dbReference type="Proteomes" id="UP000005640">
    <property type="component" value="Chromosome 19"/>
</dbReference>
<dbReference type="RNAct" id="Q99873">
    <property type="molecule type" value="protein"/>
</dbReference>
<dbReference type="Bgee" id="ENSG00000126457">
    <property type="expression patterns" value="Expressed in embryo and 195 other cell types or tissues"/>
</dbReference>
<dbReference type="ExpressionAtlas" id="Q99873">
    <property type="expression patterns" value="baseline and differential"/>
</dbReference>
<dbReference type="GO" id="GO:0005737">
    <property type="term" value="C:cytoplasm"/>
    <property type="evidence" value="ECO:0000314"/>
    <property type="project" value="UniProtKB"/>
</dbReference>
<dbReference type="GO" id="GO:0005829">
    <property type="term" value="C:cytosol"/>
    <property type="evidence" value="ECO:0000304"/>
    <property type="project" value="Reactome"/>
</dbReference>
<dbReference type="GO" id="GO:0005765">
    <property type="term" value="C:lysosomal membrane"/>
    <property type="evidence" value="ECO:0000314"/>
    <property type="project" value="UniProt"/>
</dbReference>
<dbReference type="GO" id="GO:0034709">
    <property type="term" value="C:methylosome"/>
    <property type="evidence" value="ECO:0000314"/>
    <property type="project" value="UniProtKB"/>
</dbReference>
<dbReference type="GO" id="GO:0005654">
    <property type="term" value="C:nucleoplasm"/>
    <property type="evidence" value="ECO:0000314"/>
    <property type="project" value="HPA"/>
</dbReference>
<dbReference type="GO" id="GO:0005634">
    <property type="term" value="C:nucleus"/>
    <property type="evidence" value="ECO:0000314"/>
    <property type="project" value="MGI"/>
</dbReference>
<dbReference type="GO" id="GO:0019899">
    <property type="term" value="F:enzyme binding"/>
    <property type="evidence" value="ECO:0000353"/>
    <property type="project" value="UniProtKB"/>
</dbReference>
<dbReference type="GO" id="GO:0106080">
    <property type="term" value="F:GATOR1 complex binding"/>
    <property type="evidence" value="ECO:0000250"/>
    <property type="project" value="UniProtKB"/>
</dbReference>
<dbReference type="GO" id="GO:0044020">
    <property type="term" value="F:histone H4R3 methyltransferase activity"/>
    <property type="evidence" value="ECO:0000314"/>
    <property type="project" value="UniProtKB"/>
</dbReference>
<dbReference type="GO" id="GO:0042054">
    <property type="term" value="F:histone methyltransferase activity"/>
    <property type="evidence" value="ECO:0000314"/>
    <property type="project" value="UniProtKB"/>
</dbReference>
<dbReference type="GO" id="GO:0042802">
    <property type="term" value="F:identical protein binding"/>
    <property type="evidence" value="ECO:0000314"/>
    <property type="project" value="UniProtKB"/>
</dbReference>
<dbReference type="GO" id="GO:0008327">
    <property type="term" value="F:methyl-CpG binding"/>
    <property type="evidence" value="ECO:0000314"/>
    <property type="project" value="UniProtKB"/>
</dbReference>
<dbReference type="GO" id="GO:0008168">
    <property type="term" value="F:methyltransferase activity"/>
    <property type="evidence" value="ECO:0000304"/>
    <property type="project" value="ProtInc"/>
</dbReference>
<dbReference type="GO" id="GO:0048273">
    <property type="term" value="F:mitogen-activated protein kinase p38 binding"/>
    <property type="evidence" value="ECO:0000353"/>
    <property type="project" value="BHF-UCL"/>
</dbReference>
<dbReference type="GO" id="GO:0008170">
    <property type="term" value="F:N-methyltransferase activity"/>
    <property type="evidence" value="ECO:0000314"/>
    <property type="project" value="UniProtKB"/>
</dbReference>
<dbReference type="GO" id="GO:0008276">
    <property type="term" value="F:protein methyltransferase activity"/>
    <property type="evidence" value="ECO:0000314"/>
    <property type="project" value="UniProtKB"/>
</dbReference>
<dbReference type="GO" id="GO:0016274">
    <property type="term" value="F:protein-arginine N-methyltransferase activity"/>
    <property type="evidence" value="ECO:0000314"/>
    <property type="project" value="MGI"/>
</dbReference>
<dbReference type="GO" id="GO:0035242">
    <property type="term" value="F:protein-arginine omega-N asymmetric methyltransferase activity"/>
    <property type="evidence" value="ECO:0000314"/>
    <property type="project" value="UniProtKB"/>
</dbReference>
<dbReference type="GO" id="GO:0035241">
    <property type="term" value="F:protein-arginine omega-N monomethyltransferase activity"/>
    <property type="evidence" value="ECO:0000314"/>
    <property type="project" value="UniProtKB"/>
</dbReference>
<dbReference type="GO" id="GO:0003723">
    <property type="term" value="F:RNA binding"/>
    <property type="evidence" value="ECO:0007005"/>
    <property type="project" value="UniProtKB"/>
</dbReference>
<dbReference type="GO" id="GO:1904047">
    <property type="term" value="F:S-adenosyl-L-methionine binding"/>
    <property type="evidence" value="ECO:0000314"/>
    <property type="project" value="UniProtKB"/>
</dbReference>
<dbReference type="GO" id="GO:0048738">
    <property type="term" value="P:cardiac muscle tissue development"/>
    <property type="evidence" value="ECO:0000250"/>
    <property type="project" value="UniProtKB"/>
</dbReference>
<dbReference type="GO" id="GO:0007166">
    <property type="term" value="P:cell surface receptor signaling pathway"/>
    <property type="evidence" value="ECO:0000304"/>
    <property type="project" value="ProtInc"/>
</dbReference>
<dbReference type="GO" id="GO:0061431">
    <property type="term" value="P:cellular response to methionine"/>
    <property type="evidence" value="ECO:0000314"/>
    <property type="project" value="UniProt"/>
</dbReference>
<dbReference type="GO" id="GO:0006338">
    <property type="term" value="P:chromatin remodeling"/>
    <property type="evidence" value="ECO:0000318"/>
    <property type="project" value="GO_Central"/>
</dbReference>
<dbReference type="GO" id="GO:0006974">
    <property type="term" value="P:DNA damage response"/>
    <property type="evidence" value="ECO:0000314"/>
    <property type="project" value="UniProt"/>
</dbReference>
<dbReference type="GO" id="GO:0001701">
    <property type="term" value="P:in utero embryonic development"/>
    <property type="evidence" value="ECO:0007669"/>
    <property type="project" value="Ensembl"/>
</dbReference>
<dbReference type="GO" id="GO:0046329">
    <property type="term" value="P:negative regulation of JNK cascade"/>
    <property type="evidence" value="ECO:0000315"/>
    <property type="project" value="UniProtKB"/>
</dbReference>
<dbReference type="GO" id="GO:0045653">
    <property type="term" value="P:negative regulation of megakaryocyte differentiation"/>
    <property type="evidence" value="ECO:0000314"/>
    <property type="project" value="UniProtKB"/>
</dbReference>
<dbReference type="GO" id="GO:0031175">
    <property type="term" value="P:neuron projection development"/>
    <property type="evidence" value="ECO:0000315"/>
    <property type="project" value="UniProtKB"/>
</dbReference>
<dbReference type="GO" id="GO:0018216">
    <property type="term" value="P:peptidyl-arginine methylation"/>
    <property type="evidence" value="ECO:0000314"/>
    <property type="project" value="UniProtKB"/>
</dbReference>
<dbReference type="GO" id="GO:0008284">
    <property type="term" value="P:positive regulation of cell population proliferation"/>
    <property type="evidence" value="ECO:0000315"/>
    <property type="project" value="UniProtKB"/>
</dbReference>
<dbReference type="GO" id="GO:1905168">
    <property type="term" value="P:positive regulation of double-strand break repair via homologous recombination"/>
    <property type="evidence" value="ECO:0000314"/>
    <property type="project" value="UniProtKB"/>
</dbReference>
<dbReference type="GO" id="GO:0045648">
    <property type="term" value="P:positive regulation of erythrocyte differentiation"/>
    <property type="evidence" value="ECO:0000315"/>
    <property type="project" value="BHF-UCL"/>
</dbReference>
<dbReference type="GO" id="GO:0046985">
    <property type="term" value="P:positive regulation of hemoglobin biosynthetic process"/>
    <property type="evidence" value="ECO:0000250"/>
    <property type="project" value="BHF-UCL"/>
</dbReference>
<dbReference type="GO" id="GO:1900745">
    <property type="term" value="P:positive regulation of p38MAPK cascade"/>
    <property type="evidence" value="ECO:0000250"/>
    <property type="project" value="BHF-UCL"/>
</dbReference>
<dbReference type="GO" id="GO:1904263">
    <property type="term" value="P:positive regulation of TORC1 signaling"/>
    <property type="evidence" value="ECO:0000314"/>
    <property type="project" value="UniProt"/>
</dbReference>
<dbReference type="GO" id="GO:0045727">
    <property type="term" value="P:positive regulation of translation"/>
    <property type="evidence" value="ECO:0000314"/>
    <property type="project" value="UniProt"/>
</dbReference>
<dbReference type="GO" id="GO:0051260">
    <property type="term" value="P:protein homooligomerization"/>
    <property type="evidence" value="ECO:0000314"/>
    <property type="project" value="UniProtKB"/>
</dbReference>
<dbReference type="GO" id="GO:0006479">
    <property type="term" value="P:protein methylation"/>
    <property type="evidence" value="ECO:0000315"/>
    <property type="project" value="UniProtKB"/>
</dbReference>
<dbReference type="GO" id="GO:0030510">
    <property type="term" value="P:regulation of BMP signaling pathway"/>
    <property type="evidence" value="ECO:0000314"/>
    <property type="project" value="UniProt"/>
</dbReference>
<dbReference type="GO" id="GO:0006355">
    <property type="term" value="P:regulation of DNA-templated transcription"/>
    <property type="evidence" value="ECO:0000318"/>
    <property type="project" value="GO_Central"/>
</dbReference>
<dbReference type="GO" id="GO:0045652">
    <property type="term" value="P:regulation of megakaryocyte differentiation"/>
    <property type="evidence" value="ECO:0000314"/>
    <property type="project" value="UniProtKB"/>
</dbReference>
<dbReference type="GO" id="GO:0008380">
    <property type="term" value="P:RNA splicing"/>
    <property type="evidence" value="ECO:0000250"/>
    <property type="project" value="UniProtKB"/>
</dbReference>
<dbReference type="GO" id="GO:0019082">
    <property type="term" value="P:viral protein processing"/>
    <property type="evidence" value="ECO:0000304"/>
    <property type="project" value="Reactome"/>
</dbReference>
<dbReference type="CDD" id="cd02440">
    <property type="entry name" value="AdoMet_MTases"/>
    <property type="match status" value="1"/>
</dbReference>
<dbReference type="FunFam" id="2.70.160.11:FF:000001">
    <property type="entry name" value="Blast:Protein arginine N-methyltransferase 1"/>
    <property type="match status" value="1"/>
</dbReference>
<dbReference type="FunFam" id="3.40.50.150:FF:000003">
    <property type="entry name" value="Blast:Protein arginine N-methyltransferase 1"/>
    <property type="match status" value="1"/>
</dbReference>
<dbReference type="Gene3D" id="2.70.160.11">
    <property type="entry name" value="Hnrnp arginine n-methyltransferase1"/>
    <property type="match status" value="1"/>
</dbReference>
<dbReference type="Gene3D" id="3.40.50.150">
    <property type="entry name" value="Vaccinia Virus protein VP39"/>
    <property type="match status" value="1"/>
</dbReference>
<dbReference type="InterPro" id="IPR025799">
    <property type="entry name" value="Arg_MeTrfase"/>
</dbReference>
<dbReference type="InterPro" id="IPR041698">
    <property type="entry name" value="Methyltransf_25"/>
</dbReference>
<dbReference type="InterPro" id="IPR055135">
    <property type="entry name" value="PRMT_dom"/>
</dbReference>
<dbReference type="InterPro" id="IPR029063">
    <property type="entry name" value="SAM-dependent_MTases_sf"/>
</dbReference>
<dbReference type="PANTHER" id="PTHR11006">
    <property type="entry name" value="PROTEIN ARGININE N-METHYLTRANSFERASE"/>
    <property type="match status" value="1"/>
</dbReference>
<dbReference type="PANTHER" id="PTHR11006:SF54">
    <property type="entry name" value="PROTEIN ARGININE N-METHYLTRANSFERASE 1"/>
    <property type="match status" value="1"/>
</dbReference>
<dbReference type="Pfam" id="PF13649">
    <property type="entry name" value="Methyltransf_25"/>
    <property type="match status" value="1"/>
</dbReference>
<dbReference type="Pfam" id="PF22528">
    <property type="entry name" value="PRMT_C"/>
    <property type="match status" value="1"/>
</dbReference>
<dbReference type="SUPFAM" id="SSF53335">
    <property type="entry name" value="S-adenosyl-L-methionine-dependent methyltransferases"/>
    <property type="match status" value="1"/>
</dbReference>
<dbReference type="PROSITE" id="PS51678">
    <property type="entry name" value="SAM_MT_PRMT"/>
    <property type="match status" value="1"/>
</dbReference>
<feature type="chain" id="PRO_0000212321" description="Protein arginine N-methyltransferase 1">
    <location>
        <begin position="1"/>
        <end position="371"/>
    </location>
</feature>
<feature type="domain" description="SAM-dependent MTase PRMT-type" evidence="3">
    <location>
        <begin position="50"/>
        <end position="361"/>
    </location>
</feature>
<feature type="active site" evidence="1">
    <location>
        <position position="162"/>
    </location>
</feature>
<feature type="active site" evidence="1">
    <location>
        <position position="171"/>
    </location>
</feature>
<feature type="binding site" evidence="1">
    <location>
        <position position="63"/>
    </location>
    <ligand>
        <name>S-adenosyl-L-methionine</name>
        <dbReference type="ChEBI" id="CHEBI:59789"/>
    </ligand>
</feature>
<feature type="binding site" evidence="30 43">
    <location>
        <position position="72"/>
    </location>
    <ligand>
        <name>S-adenosyl-L-homocysteine</name>
        <dbReference type="ChEBI" id="CHEBI:57856"/>
    </ligand>
</feature>
<feature type="binding site" evidence="1">
    <location>
        <position position="72"/>
    </location>
    <ligand>
        <name>S-adenosyl-L-methionine</name>
        <dbReference type="ChEBI" id="CHEBI:59789"/>
    </ligand>
</feature>
<feature type="binding site" evidence="1">
    <location>
        <position position="96"/>
    </location>
    <ligand>
        <name>S-adenosyl-L-methionine</name>
        <dbReference type="ChEBI" id="CHEBI:59789"/>
    </ligand>
</feature>
<feature type="binding site" evidence="30 43">
    <location>
        <position position="118"/>
    </location>
    <ligand>
        <name>S-adenosyl-L-homocysteine</name>
        <dbReference type="ChEBI" id="CHEBI:57856"/>
    </ligand>
</feature>
<feature type="binding site" evidence="1">
    <location>
        <position position="118"/>
    </location>
    <ligand>
        <name>S-adenosyl-L-methionine</name>
        <dbReference type="ChEBI" id="CHEBI:59789"/>
    </ligand>
</feature>
<feature type="binding site" evidence="30 43">
    <location>
        <position position="146"/>
    </location>
    <ligand>
        <name>S-adenosyl-L-homocysteine</name>
        <dbReference type="ChEBI" id="CHEBI:57856"/>
    </ligand>
</feature>
<feature type="binding site" evidence="30 43">
    <location>
        <position position="147"/>
    </location>
    <ligand>
        <name>S-adenosyl-L-homocysteine</name>
        <dbReference type="ChEBI" id="CHEBI:57856"/>
    </ligand>
</feature>
<feature type="binding site" evidence="1">
    <location>
        <position position="147"/>
    </location>
    <ligand>
        <name>S-adenosyl-L-methionine</name>
        <dbReference type="ChEBI" id="CHEBI:59789"/>
    </ligand>
</feature>
<feature type="modified residue" description="N6-succinyllysine" evidence="2">
    <location>
        <position position="134"/>
    </location>
</feature>
<feature type="modified residue" description="N6-acetyllysine" evidence="2">
    <location>
        <position position="228"/>
    </location>
</feature>
<feature type="modified residue" description="N6-acetyllysine" evidence="2">
    <location>
        <position position="233"/>
    </location>
</feature>
<feature type="modified residue" description="Phosphoserine" evidence="44">
    <location>
        <position position="304"/>
    </location>
</feature>
<feature type="modified residue" description="Phosphoserine" evidence="44">
    <location>
        <position position="307"/>
    </location>
</feature>
<feature type="cross-link" description="Glycyl lysine isopeptide (Lys-Gly) (interchain with G-Cter in ubiquitin)" evidence="2">
    <location>
        <position position="145"/>
    </location>
</feature>
<feature type="splice variant" id="VSP_005208" description="In isoform 2." evidence="36">
    <original>MAAAEAANCIMENFVATLANGMSLQPPLE</original>
    <variation>MVGVA</variation>
    <location>
        <begin position="1"/>
        <end position="29"/>
    </location>
</feature>
<feature type="splice variant" id="VSP_005209" description="In isoform 3." evidence="33 34">
    <original>MENFVATLANGMSLQPPLEE</original>
    <variation>ME</variation>
    <location>
        <begin position="11"/>
        <end position="30"/>
    </location>
</feature>
<feature type="splice variant" id="VSP_059419" description="In isoform 4.">
    <location>
        <begin position="13"/>
        <end position="30"/>
    </location>
</feature>
<feature type="splice variant" id="VSP_059420" description="In isoform 4.">
    <location>
        <begin position="186"/>
        <end position="253"/>
    </location>
</feature>
<feature type="sequence variant" id="VAR_037501" description="In dbSNP:rs1804486.">
    <original>K</original>
    <variation>M</variation>
    <location>
        <position position="88"/>
    </location>
</feature>
<feature type="sequence variant" id="VAR_037502" description="In dbSNP:rs11673683.">
    <original>L</original>
    <variation>F</variation>
    <location>
        <position position="168"/>
    </location>
</feature>
<feature type="mutagenesis site" description="Loss of FOXO1 methylation, its nuclear retention, and transcriptional activity." evidence="17">
    <original>V</original>
    <variation>A</variation>
    <location>
        <position position="92"/>
    </location>
</feature>
<feature type="mutagenesis site" description="Loss of FOXO1 methylation, its nuclear retention, and transcriptional activity." evidence="17">
    <original>L</original>
    <variation>A</variation>
    <location>
        <position position="93"/>
    </location>
</feature>
<feature type="mutagenesis site" description="Loss of FOXO1 methylation, its nuclear retention, and transcriptional activity." evidence="17">
    <original>D</original>
    <variation>A</variation>
    <location>
        <position position="94"/>
    </location>
</feature>
<feature type="mutagenesis site" description="Does not restore mTORC1 signaling pathway upon methionine or S-adenosyl-L-methionine (SAM) stimulation in PRMT1-depleted cells. Does not affect interaction with GATOR1 complex. Impairs methyltransferase activity. Inhibits methionine-stimulated mTORC1 signaling pathway. Does not affect localization at lysosome membrane." evidence="31">
    <original>G</original>
    <variation>R</variation>
    <location>
        <position position="98"/>
    </location>
</feature>
<feature type="mutagenesis site" description="Does not restore mTORC1 signaling pathway upon methionine or SAM stimulation in PRMT1-depleted cells. Does not affect interaction with GATOR1 complex. Impairs methyltransferase activity. Inhibits methionine-stimulated mTORC1 signaling pathway. Does not affect localization at lysosome membrane." evidence="31">
    <original>E</original>
    <variation>Q</variation>
    <location>
        <position position="162"/>
    </location>
</feature>
<feature type="mutagenesis site" description="No effect on S-adenosyl-L-methionine binding but reduced EWS protein methylation; when associated with A-322 and A-359. No effect on homodimerization but loss of homooligomerization; when associated with A-322 and A-359." evidence="24">
    <original>Y</original>
    <variation>A</variation>
    <location>
        <position position="280"/>
    </location>
</feature>
<feature type="mutagenesis site" description="No effect on S-adenosyl-L-methionine binding but reduced EWS protein methylation; when associated with A-280 and A-359. No effect on homodimerization but loss of homooligomerization; when associated with A-280 and A-359." evidence="24">
    <original>Y</original>
    <variation>A</variation>
    <location>
        <position position="322"/>
    </location>
</feature>
<feature type="mutagenesis site" description="No effect on S-adenosyl-L-methionine binding but reduced EWS protein methylation; when associated with A-280 and A-322. No effect on homodimerization but loss of homooligomerization; when associated with A-280 and A-322." evidence="24">
    <original>L</original>
    <variation>A</variation>
    <location>
        <position position="359"/>
    </location>
</feature>
<feature type="sequence conflict" description="In Ref. 1; CAA71763/CAA71764/CAA71765 and 2; BAA11029." evidence="37" ref="1 2">
    <original>E</original>
    <variation>V</variation>
    <location>
        <position position="118"/>
    </location>
</feature>
<feature type="sequence conflict" description="In Ref. 2; BAA11029." evidence="37" ref="2">
    <original>DIIISEWMGYCLFYESMLNTVLYARDKWL</original>
    <variation>ASSSASGWATASSTSPCSTPCSMPGTSV</variation>
    <location>
        <begin position="157"/>
        <end position="185"/>
    </location>
</feature>
<feature type="sequence conflict" description="In Ref. 4; BAG65435." evidence="37" ref="4">
    <original>K</original>
    <variation>E</variation>
    <location>
        <position position="212"/>
    </location>
</feature>
<feature type="helix" evidence="45">
    <location>
        <begin position="44"/>
        <end position="46"/>
    </location>
</feature>
<feature type="helix" evidence="45">
    <location>
        <begin position="49"/>
        <end position="52"/>
    </location>
</feature>
<feature type="helix" evidence="45">
    <location>
        <begin position="56"/>
        <end position="58"/>
    </location>
</feature>
<feature type="helix" evidence="45">
    <location>
        <begin position="60"/>
        <end position="68"/>
    </location>
</feature>
<feature type="helix" evidence="45">
    <location>
        <begin position="70"/>
        <end position="81"/>
    </location>
</feature>
<feature type="helix" evidence="45">
    <location>
        <begin position="84"/>
        <end position="87"/>
    </location>
</feature>
<feature type="strand" evidence="45">
    <location>
        <begin position="91"/>
        <end position="96"/>
    </location>
</feature>
<feature type="helix" evidence="45">
    <location>
        <begin position="101"/>
        <end position="108"/>
    </location>
</feature>
<feature type="strand" evidence="45">
    <location>
        <begin position="112"/>
        <end position="118"/>
    </location>
</feature>
<feature type="helix" evidence="45">
    <location>
        <begin position="123"/>
        <end position="132"/>
    </location>
</feature>
<feature type="turn" evidence="45">
    <location>
        <begin position="136"/>
        <end position="138"/>
    </location>
</feature>
<feature type="strand" evidence="45">
    <location>
        <begin position="139"/>
        <end position="144"/>
    </location>
</feature>
<feature type="helix" evidence="45">
    <location>
        <begin position="146"/>
        <end position="148"/>
    </location>
</feature>
<feature type="strand" evidence="45">
    <location>
        <begin position="152"/>
        <end position="154"/>
    </location>
</feature>
<feature type="strand" evidence="45">
    <location>
        <begin position="156"/>
        <end position="160"/>
    </location>
</feature>
<feature type="turn" evidence="45">
    <location>
        <begin position="169"/>
        <end position="171"/>
    </location>
</feature>
<feature type="helix" evidence="45">
    <location>
        <begin position="174"/>
        <end position="184"/>
    </location>
</feature>
<feature type="strand" evidence="45">
    <location>
        <begin position="185"/>
        <end position="193"/>
    </location>
</feature>
<feature type="strand" evidence="45">
    <location>
        <begin position="195"/>
        <end position="203"/>
    </location>
</feature>
<feature type="helix" evidence="45">
    <location>
        <begin position="206"/>
        <end position="212"/>
    </location>
</feature>
<feature type="helix" evidence="45">
    <location>
        <begin position="214"/>
        <end position="217"/>
    </location>
</feature>
<feature type="helix" evidence="45">
    <location>
        <begin position="225"/>
        <end position="231"/>
    </location>
</feature>
<feature type="strand" evidence="45">
    <location>
        <begin position="236"/>
        <end position="238"/>
    </location>
</feature>
<feature type="helix" evidence="45">
    <location>
        <begin position="242"/>
        <end position="244"/>
    </location>
</feature>
<feature type="strand" evidence="45">
    <location>
        <begin position="250"/>
        <end position="256"/>
    </location>
</feature>
<feature type="turn" evidence="45">
    <location>
        <begin position="257"/>
        <end position="259"/>
    </location>
</feature>
<feature type="helix" evidence="45">
    <location>
        <begin position="262"/>
        <end position="265"/>
    </location>
</feature>
<feature type="strand" evidence="45">
    <location>
        <begin position="266"/>
        <end position="275"/>
    </location>
</feature>
<feature type="strand" evidence="45">
    <location>
        <begin position="277"/>
        <end position="291"/>
    </location>
</feature>
<feature type="strand" evidence="45">
    <location>
        <begin position="295"/>
        <end position="297"/>
    </location>
</feature>
<feature type="strand" evidence="45">
    <location>
        <begin position="300"/>
        <end position="302"/>
    </location>
</feature>
<feature type="strand" evidence="45">
    <location>
        <begin position="314"/>
        <end position="325"/>
    </location>
</feature>
<feature type="strand" evidence="45">
    <location>
        <begin position="330"/>
        <end position="339"/>
    </location>
</feature>
<feature type="strand" evidence="45">
    <location>
        <begin position="346"/>
        <end position="356"/>
    </location>
</feature>
<feature type="strand" evidence="45">
    <location>
        <begin position="361"/>
        <end position="370"/>
    </location>
</feature>
<gene>
    <name evidence="42" type="primary">PRMT1</name>
    <name type="synonym">HMT2</name>
    <name evidence="32 35" type="synonym">HRMT1L2</name>
    <name type="synonym">IR1B4</name>
</gene>
<keyword id="KW-0002">3D-structure</keyword>
<keyword id="KW-0007">Acetylation</keyword>
<keyword id="KW-0025">Alternative splicing</keyword>
<keyword id="KW-0963">Cytoplasm</keyword>
<keyword id="KW-1017">Isopeptide bond</keyword>
<keyword id="KW-0458">Lysosome</keyword>
<keyword id="KW-0472">Membrane</keyword>
<keyword id="KW-0489">Methyltransferase</keyword>
<keyword id="KW-0539">Nucleus</keyword>
<keyword id="KW-0597">Phosphoprotein</keyword>
<keyword id="KW-1267">Proteomics identification</keyword>
<keyword id="KW-1185">Reference proteome</keyword>
<keyword id="KW-0949">S-adenosyl-L-methionine</keyword>
<keyword id="KW-0808">Transferase</keyword>
<keyword id="KW-0832">Ubl conjugation</keyword>
<comment type="function">
    <text evidence="2 4 7 8 9 11 12 13 14 15 16 18 19 20 21 23 24 25 26 28 29 30 31">Arginine methyltransferase that methylates (mono and asymmetric dimethylation) the guanidino nitrogens of arginyl residues present in proteins such as ESR1, histone H2, H3 and H4, FMR1, ILF3, HNRNPA1, HNRNPD, NFATC2IP, SUPT5H, TAF15, EWS, HABP4, SERBP1, RBM15, FOXO1, CHTOP, MAP3K5/ASK1, MICU1 and NPRL2 (PubMed:10749851, PubMed:15741314, PubMed:16879614, PubMed:18951090, PubMed:22095282, PubMed:25284789, PubMed:26575292, PubMed:26876602, PubMed:27642082, PubMed:30765518, PubMed:31257072, PubMed:38006878). Constitutes the main enzyme that mediates monomethylation and asymmetric dimethylation of histone H4 'Arg-3' (H4R3me1 and H4R3me2a, respectively), a specific tag for epigenetic transcriptional activation. May be involved in the regulation of TAF15 transcriptional activity, act as an activator of estrogen receptor (ER)-mediated transactivation, play a key role in neurite outgrowth and act as a negative regulator of megakaryocytic differentiation, by modulating p38 MAPK pathway. Methylates RBM15, promoting ubiquitination and degradation of RBM15 (PubMed:26575292). Methylates MRE11 and TP53BP1, promoting the DNA damage response (PubMed:15741314, PubMed:16294045, PubMed:29651020). Methylates FOXO1 and retains it in the nucleus increasing its transcriptional activity (PubMed:18951090). Methylates CHTOP and this methylation is critical for its 5-hydroxymethylcytosine (5hmC)-binding activity (PubMed:25284789). Methylates MAP3K5/ASK1 at 'Arg-78' and 'Arg-80' which promotes association of MAP3K5 with thioredoxin and negatively regulates MAP3K5 association with TRAF2, inhibiting MAP3K5 stimulation and MAP3K5-induced activation of JNK (PubMed:22095282). Methylates H4R3 in genes involved in glioblastomagenesis in a CHTOP- and/or TET1-dependent manner (PubMed:25284789). Plays a role in regulating alternative splicing in the heart (By similarity). Methylates NPRL2 at 'Arg-78' leading to inhibition of its GTPase activator activity and then the GATOR1 complex and consequently inducing timely mTORC1 activation under methionine-sufficient conditions (PubMed:38006878).</text>
</comment>
<comment type="catalytic activity">
    <reaction evidence="7 8 11 20 23 25 26 30 31">
        <text>L-arginyl-[protein] + 2 S-adenosyl-L-methionine = N(omega),N(omega)-dimethyl-L-arginyl-[protein] + 2 S-adenosyl-L-homocysteine + 2 H(+)</text>
        <dbReference type="Rhea" id="RHEA:48096"/>
        <dbReference type="Rhea" id="RHEA-COMP:10532"/>
        <dbReference type="Rhea" id="RHEA-COMP:11991"/>
        <dbReference type="ChEBI" id="CHEBI:15378"/>
        <dbReference type="ChEBI" id="CHEBI:29965"/>
        <dbReference type="ChEBI" id="CHEBI:57856"/>
        <dbReference type="ChEBI" id="CHEBI:59789"/>
        <dbReference type="ChEBI" id="CHEBI:61897"/>
        <dbReference type="EC" id="2.1.1.319"/>
    </reaction>
    <physiologicalReaction direction="left-to-right" evidence="11 30 31 41">
        <dbReference type="Rhea" id="RHEA:48097"/>
    </physiologicalReaction>
</comment>
<comment type="catalytic activity">
    <reaction evidence="8">
        <text>L-arginyl-[protein] + S-adenosyl-L-methionine = N(omega)-methyl-L-arginyl-[protein] + S-adenosyl-L-homocysteine + H(+)</text>
        <dbReference type="Rhea" id="RHEA:48100"/>
        <dbReference type="Rhea" id="RHEA-COMP:10532"/>
        <dbReference type="Rhea" id="RHEA-COMP:11990"/>
        <dbReference type="ChEBI" id="CHEBI:15378"/>
        <dbReference type="ChEBI" id="CHEBI:29965"/>
        <dbReference type="ChEBI" id="CHEBI:57856"/>
        <dbReference type="ChEBI" id="CHEBI:59789"/>
        <dbReference type="ChEBI" id="CHEBI:65280"/>
    </reaction>
    <physiologicalReaction direction="left-to-right" evidence="38">
        <dbReference type="Rhea" id="RHEA:48101"/>
    </physiologicalReaction>
</comment>
<comment type="catalytic activity">
    <reaction evidence="20 23">
        <text>N(omega)-methyl-L-arginyl-[protein] + S-adenosyl-L-methionine = N(omega),N(omega)-dimethyl-L-arginyl-[protein] + S-adenosyl-L-homocysteine + H(+)</text>
        <dbReference type="Rhea" id="RHEA:48104"/>
        <dbReference type="Rhea" id="RHEA-COMP:11990"/>
        <dbReference type="Rhea" id="RHEA-COMP:11991"/>
        <dbReference type="ChEBI" id="CHEBI:15378"/>
        <dbReference type="ChEBI" id="CHEBI:57856"/>
        <dbReference type="ChEBI" id="CHEBI:59789"/>
        <dbReference type="ChEBI" id="CHEBI:61897"/>
        <dbReference type="ChEBI" id="CHEBI:65280"/>
    </reaction>
    <physiologicalReaction direction="left-to-right" evidence="41">
        <dbReference type="Rhea" id="RHEA:48105"/>
    </physiologicalReaction>
</comment>
<comment type="biophysicochemical properties">
    <kinetics>
        <KM evidence="31">5.024 uM for S-adenosyl-L-methionine</KM>
    </kinetics>
</comment>
<comment type="subunit">
    <text evidence="2 4 6 9 10 13 14 17 20 21 22 24 27 28 31">Homodimer (PubMed:16879614, PubMed:26876602). Homooctamer; individual homodimers associates to form a homooctamer (PubMed:26876602). Individual homodimers can associate to form a homohexamer. Heterodimer with PRMT8. Interacts with BTG1, BTG2, NFATC2IP and IFNAR1 (By similarity). Interacts with and methylates CHTOP, thereby enabling the interaction of CHTOP with the 5FMC complex (PubMed:25284789). Interacts with ILF3 and SUPT5H. Interacts with and methylates FOXO1, leading to the nuclear retention of FOXO1 and the stimulation of FOXO1 transcriptional activity. Methylation of FOXO1 is increased upon oxidative stress. Interacts with and probably methylates ATXN2L (PubMed:25748791). Component of the methylosome, a 20S complex containing at least CLNS1A/pICln, PRMT5/SKB1, WDR77/MEP50, PRMT1 and ERH (PubMed:25284789). Interacts with DHX9 (via RGG region) (PubMed:15084609). Interacts (via N-terminus) with HABP4 (PubMed:16879614). Interacts with MAP3K5/ASK1; the interaction results in MAP3K5 methylation by PRMT1 which inhibits MAP3K5 activation (PubMed:22095282). Interacts with TRIM48; the interaction results in ubiquitination of PRMT1 by TRIM48, leading to PRMT1 proteasomal degradation and activation of MAP3K5 (PubMed:29186683). Interacts with GATOR1 complex; this interaction is S-adenosyl-L-methionine (SAM) dependent and is perturbated by SAMTOR in a SAM-sensitive manner (PubMed:38006878). Interacts with GFI1; promoting recognition and binding of MRE11 and TP53BP1 substrates by PRMT1 (PubMed:29651020).</text>
</comment>
<comment type="interaction">
    <interactant intactId="EBI-78738">
        <id>Q99873</id>
    </interactant>
    <interactant intactId="EBI-347794">
        <id>Q9Y3Y2</id>
        <label>CHTOP</label>
    </interactant>
    <organismsDiffer>false</organismsDiffer>
    <experiments>5</experiments>
</comment>
<comment type="interaction">
    <interactant intactId="EBI-78738">
        <id>Q99873</id>
    </interactant>
    <interactant intactId="EBI-740686">
        <id>Q5TAQ9</id>
        <label>DCAF8</label>
    </interactant>
    <organismsDiffer>false</organismsDiffer>
    <experiments>2</experiments>
</comment>
<comment type="interaction">
    <interactant intactId="EBI-78738">
        <id>Q99873</id>
    </interactant>
    <interactant intactId="EBI-352022">
        <id>Q08211</id>
        <label>DHX9</label>
    </interactant>
    <organismsDiffer>false</organismsDiffer>
    <experiments>3</experiments>
</comment>
<comment type="interaction">
    <interactant intactId="EBI-78738">
        <id>Q99873</id>
    </interactant>
    <interactant intactId="EBI-739737">
        <id>Q01844</id>
        <label>EWSR1</label>
    </interactant>
    <organismsDiffer>false</organismsDiffer>
    <experiments>2</experiments>
</comment>
<comment type="interaction">
    <interactant intactId="EBI-78738">
        <id>Q99873</id>
    </interactant>
    <interactant intactId="EBI-8468186">
        <id>Q8IZU1</id>
        <label>FAM9A</label>
    </interactant>
    <organismsDiffer>false</organismsDiffer>
    <experiments>2</experiments>
</comment>
<comment type="interaction">
    <interactant intactId="EBI-78738">
        <id>Q99873</id>
    </interactant>
    <interactant intactId="EBI-400434">
        <id>P35637</id>
        <label>FUS</label>
    </interactant>
    <organismsDiffer>false</organismsDiffer>
    <experiments>5</experiments>
</comment>
<comment type="interaction">
    <interactant intactId="EBI-78738">
        <id>Q99873</id>
    </interactant>
    <interactant intactId="EBI-302023">
        <id>P62805</id>
        <label>H4C9</label>
    </interactant>
    <organismsDiffer>false</organismsDiffer>
    <experiments>2</experiments>
</comment>
<comment type="interaction">
    <interactant intactId="EBI-78738">
        <id>Q99873</id>
    </interactant>
    <interactant intactId="EBI-523625">
        <id>Q5JVS0</id>
        <label>HABP4</label>
    </interactant>
    <organismsDiffer>false</organismsDiffer>
    <experiments>2</experiments>
</comment>
<comment type="interaction">
    <interactant intactId="EBI-78738">
        <id>Q99873</id>
    </interactant>
    <interactant intactId="EBI-304185">
        <id>P61978</id>
        <label>HNRNPK</label>
    </interactant>
    <organismsDiffer>false</organismsDiffer>
    <experiments>3</experiments>
</comment>
<comment type="interaction">
    <interactant intactId="EBI-78738">
        <id>Q99873</id>
    </interactant>
    <interactant intactId="EBI-713419">
        <id>O43390</id>
        <label>HNRNPR</label>
    </interactant>
    <organismsDiffer>false</organismsDiffer>
    <experiments>5</experiments>
</comment>
<comment type="interaction">
    <interactant intactId="EBI-78738">
        <id>Q99873</id>
    </interactant>
    <interactant intactId="EBI-78756">
        <id>Q12906</id>
        <label>ILF3</label>
    </interactant>
    <organismsDiffer>false</organismsDiffer>
    <experiments>4</experiments>
</comment>
<comment type="interaction">
    <interactant intactId="EBI-78738">
        <id>Q99873</id>
    </interactant>
    <interactant intactId="EBI-721550">
        <id>P22736</id>
        <label>NR4A1</label>
    </interactant>
    <organismsDiffer>false</organismsDiffer>
    <experiments>6</experiments>
</comment>
<comment type="interaction">
    <interactant intactId="EBI-78738">
        <id>Q99873</id>
    </interactant>
    <interactant intactId="EBI-746484">
        <id>P48552</id>
        <label>NRIP1</label>
    </interactant>
    <organismsDiffer>false</organismsDiffer>
    <experiments>4</experiments>
</comment>
<comment type="interaction">
    <interactant intactId="EBI-78738">
        <id>Q99873</id>
    </interactant>
    <interactant intactId="EBI-741158">
        <id>Q96HA8</id>
        <label>NTAQ1</label>
    </interactant>
    <organismsDiffer>false</organismsDiffer>
    <experiments>3</experiments>
</comment>
<comment type="interaction">
    <interactant intactId="EBI-78738">
        <id>Q99873</id>
    </interactant>
    <interactant intactId="EBI-8477661">
        <id>Q8IZS5</id>
        <label>OFCC1</label>
    </interactant>
    <organismsDiffer>false</organismsDiffer>
    <experiments>2</experiments>
</comment>
<comment type="interaction">
    <interactant intactId="EBI-78738">
        <id>Q99873</id>
    </interactant>
    <interactant intactId="EBI-78738">
        <id>Q99873</id>
        <label>PRMT1</label>
    </interactant>
    <organismsDiffer>false</organismsDiffer>
    <experiments>4</experiments>
</comment>
<comment type="interaction">
    <interactant intactId="EBI-78738">
        <id>Q99873</id>
    </interactant>
    <interactant intactId="EBI-745545">
        <id>Q9NR22</id>
        <label>PRMT8</label>
    </interactant>
    <organismsDiffer>false</organismsDiffer>
    <experiments>5</experiments>
</comment>
<comment type="interaction">
    <interactant intactId="EBI-78738">
        <id>Q99873</id>
    </interactant>
    <interactant intactId="EBI-10186886">
        <id>Q9NR22-2</id>
        <label>PRMT8</label>
    </interactant>
    <organismsDiffer>false</organismsDiffer>
    <experiments>5</experiments>
</comment>
<comment type="interaction">
    <interactant intactId="EBI-78738">
        <id>Q99873</id>
    </interactant>
    <interactant intactId="EBI-1384196">
        <id>Q15772</id>
        <label>SPEG</label>
    </interactant>
    <organismsDiffer>false</organismsDiffer>
    <experiments>3</experiments>
</comment>
<comment type="interaction">
    <interactant intactId="EBI-78738">
        <id>Q99873</id>
    </interactant>
    <interactant intactId="EBI-2659201">
        <id>Q96BD6</id>
        <label>SPSB1</label>
    </interactant>
    <organismsDiffer>false</organismsDiffer>
    <experiments>2</experiments>
</comment>
<comment type="interaction">
    <interactant intactId="EBI-78738">
        <id>Q99873</id>
    </interactant>
    <interactant intactId="EBI-2323209">
        <id>Q99619</id>
        <label>SPSB2</label>
    </interactant>
    <organismsDiffer>false</organismsDiffer>
    <experiments>2</experiments>
</comment>
<comment type="interaction">
    <interactant intactId="EBI-78738">
        <id>Q99873</id>
    </interactant>
    <interactant intactId="EBI-1024357">
        <id>O60506</id>
        <label>SYNCRIP</label>
    </interactant>
    <organismsDiffer>false</organismsDiffer>
    <experiments>2</experiments>
</comment>
<comment type="interaction">
    <interactant intactId="EBI-78738">
        <id>Q99873</id>
    </interactant>
    <interactant intactId="EBI-301246">
        <id>P40337</id>
        <label>VHL</label>
    </interactant>
    <organismsDiffer>false</organismsDiffer>
    <experiments>2</experiments>
</comment>
<comment type="interaction">
    <interactant intactId="EBI-78738">
        <id>Q99873</id>
    </interactant>
    <interactant intactId="EBI-6179727">
        <id>PRO_0000038596</id>
        <label>gag</label>
        <dbReference type="UniProtKB" id="P04591"/>
    </interactant>
    <organismsDiffer>true</organismsDiffer>
    <experiments>2</experiments>
</comment>
<comment type="interaction">
    <interactant intactId="EBI-78738">
        <id>Q99873</id>
    </interactant>
    <interactant intactId="EBI-25475856">
        <id>P0DTC9</id>
        <label>N</label>
    </interactant>
    <organismsDiffer>true</organismsDiffer>
    <experiments>3</experiments>
</comment>
<comment type="interaction">
    <interactant intactId="EBI-16399024">
        <id>Q99873-2</id>
    </interactant>
    <interactant intactId="EBI-750300">
        <id>Q01658</id>
        <label>DR1</label>
    </interactant>
    <organismsDiffer>false</organismsDiffer>
    <experiments>3</experiments>
</comment>
<comment type="interaction">
    <interactant intactId="EBI-17165527">
        <id>Q99873-3</id>
    </interactant>
    <interactant intactId="EBI-295634">
        <id>Q16543</id>
        <label>CDC37</label>
    </interactant>
    <organismsDiffer>false</organismsDiffer>
    <experiments>3</experiments>
</comment>
<comment type="interaction">
    <interactant intactId="EBI-17165527">
        <id>Q99873-3</id>
    </interactant>
    <interactant intactId="EBI-400434">
        <id>P35637</id>
        <label>FUS</label>
    </interactant>
    <organismsDiffer>false</organismsDiffer>
    <experiments>3</experiments>
</comment>
<comment type="interaction">
    <interactant intactId="EBI-17165527">
        <id>Q99873-3</id>
    </interactant>
    <interactant intactId="EBI-17165527">
        <id>Q99873-3</id>
        <label>PRMT1</label>
    </interactant>
    <organismsDiffer>false</organismsDiffer>
    <experiments>3</experiments>
</comment>
<comment type="interaction">
    <interactant intactId="EBI-17165527">
        <id>Q99873-3</id>
    </interactant>
    <interactant intactId="EBI-745545">
        <id>Q9NR22</id>
        <label>PRMT8</label>
    </interactant>
    <organismsDiffer>false</organismsDiffer>
    <experiments>10</experiments>
</comment>
<comment type="interaction">
    <interactant intactId="EBI-17165527">
        <id>Q99873-3</id>
    </interactant>
    <interactant intactId="EBI-12175897">
        <id>Q15772-4</id>
        <label>SPEG</label>
    </interactant>
    <organismsDiffer>false</organismsDiffer>
    <experiments>3</experiments>
</comment>
<comment type="interaction">
    <interactant intactId="EBI-17165527">
        <id>Q99873-3</id>
    </interactant>
    <interactant intactId="EBI-11123832">
        <id>O60506-4</id>
        <label>SYNCRIP</label>
    </interactant>
    <organismsDiffer>false</organismsDiffer>
    <experiments>4</experiments>
</comment>
<comment type="subcellular location">
    <subcellularLocation>
        <location evidence="4 7 13">Nucleus</location>
    </subcellularLocation>
    <subcellularLocation>
        <location evidence="2">Nucleus</location>
        <location evidence="2">Nucleoplasm</location>
    </subcellularLocation>
    <subcellularLocation>
        <location evidence="24">Cytoplasm</location>
    </subcellularLocation>
    <subcellularLocation>
        <location evidence="2">Cytoplasm</location>
        <location evidence="2">Cytosol</location>
    </subcellularLocation>
    <subcellularLocation>
        <location evidence="31">Lysosome membrane</location>
    </subcellularLocation>
    <text evidence="2 31">Mostly found in the cytoplasm. Colocalizes with CHTOP within the nucleus. Low levels detected also in the chromatin fraction (By similarity). Upon methionine stimulation, localizes to the lysosome membrane in an NPRL2-dependent manner (PubMed:38006878).</text>
</comment>
<comment type="alternative products">
    <event type="alternative splicing"/>
    <isoform>
        <id>Q99873-1</id>
        <name>1</name>
        <name>V2</name>
        <sequence type="displayed"/>
    </isoform>
    <isoform>
        <id>Q99873-2</id>
        <name>2</name>
        <name>V3</name>
        <sequence type="described" ref="VSP_005208"/>
    </isoform>
    <isoform>
        <id>Q99873-3</id>
        <name>3</name>
        <name>V1</name>
        <sequence type="described" ref="VSP_005209"/>
    </isoform>
    <isoform>
        <id>Q99873-5</id>
        <name>4</name>
        <sequence type="described" ref="VSP_059419 VSP_059420"/>
    </isoform>
</comment>
<comment type="tissue specificity">
    <text evidence="5 26">Widely expressed (PubMed:11097842). Expressed strongly in colorectal cancer cells (at protein level) (PubMed:28040436). Expressed strongly in colorectal cancer tissues compared to wild-type colon samples (at protein level) (PubMed:28040436). Expressed strongly in colorectal cancer tissues compared to wild-type colon samples (PubMed:28040436).</text>
</comment>
<comment type="PTM">
    <text evidence="2 27">Polyubiquitinated at Lys-145 by the SCF(FBXL17) complex, leading to its subsequent degradation (By similarity). Ubiquitination is regulated by acetylation at Lys-228 and Lys-233 (By similarity). Polyubiquitinated by E3 ubiquitin-protein ligase TRIM48, leading to suppression of MAP3K5/ASK1 methylation and subsequent MAP3K5 activation (PubMed:29186683).</text>
</comment>
<comment type="PTM">
    <text evidence="2">Acetylation at Lys-228 and Lys-233 regulates ubiquitination by the SCF(FBXL17) complex. Acetylated at Lys-233 by p300/EP300. Deacetylated at Lys-228 and Lys-233 by SIRT1.</text>
</comment>
<comment type="similarity">
    <text evidence="3">Belongs to the class I-like SAM-binding methyltransferase superfamily. Protein arginine N-methyltransferase family.</text>
</comment>
<comment type="caution">
    <text evidence="39 40">A paper showing that PRMT1-mediated arginine methylation of PIAS1 regulates STAT1 signaling has been retracted, because some of the data was found to be deliberately falsified.</text>
</comment>
<comment type="sequence caution" evidence="37">
    <conflict type="erroneous initiation">
        <sequence resource="EMBL-CDS" id="AAF62894"/>
    </conflict>
    <text>Truncated N-terminus.</text>
</comment>
<comment type="sequence caution" evidence="37">
    <conflict type="erroneous initiation">
        <sequence resource="EMBL-CDS" id="AAF62895"/>
    </conflict>
    <text>Truncated N-terminus.</text>
</comment>
<comment type="sequence caution" evidence="37">
    <conflict type="erroneous initiation">
        <sequence resource="EMBL-CDS" id="AAI09283"/>
    </conflict>
    <text>Truncated N-terminus.</text>
</comment>
<comment type="sequence caution" evidence="37">
    <conflict type="erroneous initiation">
        <sequence resource="EMBL-CDS" id="AAI09284"/>
    </conflict>
    <text>Truncated N-terminus.</text>
</comment>
<comment type="sequence caution" evidence="37">
    <conflict type="erroneous initiation">
        <sequence resource="EMBL-CDS" id="BAA11029"/>
    </conflict>
    <text>Truncated N-terminus.</text>
</comment>
<comment type="sequence caution" evidence="37">
    <conflict type="erroneous initiation">
        <sequence resource="EMBL-CDS" id="CAA71764"/>
    </conflict>
    <text>Truncated N-terminus.</text>
</comment>
<comment type="sequence caution" evidence="37">
    <conflict type="erroneous initiation">
        <sequence resource="EMBL-CDS" id="CAA71765"/>
    </conflict>
    <text>Truncated N-terminus.</text>
</comment>
<evidence type="ECO:0000250" key="1">
    <source>
        <dbReference type="UniProtKB" id="Q63009"/>
    </source>
</evidence>
<evidence type="ECO:0000250" key="2">
    <source>
        <dbReference type="UniProtKB" id="Q9JIF0"/>
    </source>
</evidence>
<evidence type="ECO:0000255" key="3">
    <source>
        <dbReference type="PROSITE-ProRule" id="PRU01015"/>
    </source>
</evidence>
<evidence type="ECO:0000269" key="4">
    <source>
    </source>
</evidence>
<evidence type="ECO:0000269" key="5">
    <source>
    </source>
</evidence>
<evidence type="ECO:0000269" key="6">
    <source>
    </source>
</evidence>
<evidence type="ECO:0000269" key="7">
    <source>
    </source>
</evidence>
<evidence type="ECO:0000269" key="8">
    <source>
    </source>
</evidence>
<evidence type="ECO:0000269" key="9">
    <source>
    </source>
</evidence>
<evidence type="ECO:0000269" key="10">
    <source>
    </source>
</evidence>
<evidence type="ECO:0000269" key="11">
    <source>
    </source>
</evidence>
<evidence type="ECO:0000269" key="12">
    <source>
    </source>
</evidence>
<evidence type="ECO:0000269" key="13">
    <source>
    </source>
</evidence>
<evidence type="ECO:0000269" key="14">
    <source>
    </source>
</evidence>
<evidence type="ECO:0000269" key="15">
    <source>
    </source>
</evidence>
<evidence type="ECO:0000269" key="16">
    <source>
    </source>
</evidence>
<evidence type="ECO:0000269" key="17">
    <source>
    </source>
</evidence>
<evidence type="ECO:0000269" key="18">
    <source>
    </source>
</evidence>
<evidence type="ECO:0000269" key="19">
    <source>
    </source>
</evidence>
<evidence type="ECO:0000269" key="20">
    <source>
    </source>
</evidence>
<evidence type="ECO:0000269" key="21">
    <source>
    </source>
</evidence>
<evidence type="ECO:0000269" key="22">
    <source>
    </source>
</evidence>
<evidence type="ECO:0000269" key="23">
    <source>
    </source>
</evidence>
<evidence type="ECO:0000269" key="24">
    <source>
    </source>
</evidence>
<evidence type="ECO:0000269" key="25">
    <source>
    </source>
</evidence>
<evidence type="ECO:0000269" key="26">
    <source>
    </source>
</evidence>
<evidence type="ECO:0000269" key="27">
    <source>
    </source>
</evidence>
<evidence type="ECO:0000269" key="28">
    <source>
    </source>
</evidence>
<evidence type="ECO:0000269" key="29">
    <source>
    </source>
</evidence>
<evidence type="ECO:0000269" key="30">
    <source>
    </source>
</evidence>
<evidence type="ECO:0000269" key="31">
    <source>
    </source>
</evidence>
<evidence type="ECO:0000303" key="32">
    <source>
    </source>
</evidence>
<evidence type="ECO:0000303" key="33">
    <source>
    </source>
</evidence>
<evidence type="ECO:0000303" key="34">
    <source>
    </source>
</evidence>
<evidence type="ECO:0000303" key="35">
    <source>
    </source>
</evidence>
<evidence type="ECO:0000303" key="36">
    <source ref="5"/>
</evidence>
<evidence type="ECO:0000305" key="37"/>
<evidence type="ECO:0000305" key="38">
    <source>
    </source>
</evidence>
<evidence type="ECO:0000305" key="39">
    <source>
    </source>
</evidence>
<evidence type="ECO:0000305" key="40">
    <source>
    </source>
</evidence>
<evidence type="ECO:0000305" key="41">
    <source>
    </source>
</evidence>
<evidence type="ECO:0000312" key="42">
    <source>
        <dbReference type="HGNC" id="HGNC:5187"/>
    </source>
</evidence>
<evidence type="ECO:0007744" key="43">
    <source>
        <dbReference type="PDB" id="6NT2"/>
    </source>
</evidence>
<evidence type="ECO:0007744" key="44">
    <source>
    </source>
</evidence>
<evidence type="ECO:0007829" key="45">
    <source>
        <dbReference type="PDB" id="6NT2"/>
    </source>
</evidence>
<proteinExistence type="evidence at protein level"/>
<reference key="1">
    <citation type="journal article" date="1998" name="Genomics">
        <title>Identification and characterization of two putative human arginine methyltransferases (HRMT1L1 and HRMT1L2).</title>
        <authorList>
            <person name="Scott H.S."/>
            <person name="Antonarakis S.E."/>
            <person name="Lalioti M.D."/>
            <person name="Rossier C."/>
            <person name="Silver P.A."/>
            <person name="Henry M.F."/>
        </authorList>
    </citation>
    <scope>NUCLEOTIDE SEQUENCE [MRNA]</scope>
    <scope>ALTERNATIVE SPLICING</scope>
</reference>
<reference key="2">
    <citation type="journal article" date="1996" name="Gene">
        <title>Structural and functional conservation of human and yeast HCP1 genes which can suppress the growth defect of the Saccharomyces cerevisiae ire15 mutant.</title>
        <authorList>
            <person name="Nikawa J."/>
            <person name="Nakano H."/>
            <person name="Ohi N."/>
        </authorList>
    </citation>
    <scope>NUCLEOTIDE SEQUENCE [MRNA]</scope>
    <source>
        <tissue>Glial cell</tissue>
    </source>
</reference>
<reference key="3">
    <citation type="journal article" date="2000" name="Biochem. Biophys. Res. Commun.">
        <title>Genomic organization, physical mapping, and expression analysis of the human protein arginine methyltransferase 1 gene.</title>
        <authorList>
            <person name="Scorilas A."/>
            <person name="Black M.H."/>
            <person name="Talieri M."/>
            <person name="Diamandis E.P."/>
        </authorList>
    </citation>
    <scope>NUCLEOTIDE SEQUENCE [GENOMIC DNA]</scope>
    <scope>ALTERNATIVE SPLICING</scope>
    <scope>TISSUE SPECIFICITY</scope>
</reference>
<reference key="4">
    <citation type="journal article" date="2004" name="Nat. Genet.">
        <title>Complete sequencing and characterization of 21,243 full-length human cDNAs.</title>
        <authorList>
            <person name="Ota T."/>
            <person name="Suzuki Y."/>
            <person name="Nishikawa T."/>
            <person name="Otsuki T."/>
            <person name="Sugiyama T."/>
            <person name="Irie R."/>
            <person name="Wakamatsu A."/>
            <person name="Hayashi K."/>
            <person name="Sato H."/>
            <person name="Nagai K."/>
            <person name="Kimura K."/>
            <person name="Makita H."/>
            <person name="Sekine M."/>
            <person name="Obayashi M."/>
            <person name="Nishi T."/>
            <person name="Shibahara T."/>
            <person name="Tanaka T."/>
            <person name="Ishii S."/>
            <person name="Yamamoto J."/>
            <person name="Saito K."/>
            <person name="Kawai Y."/>
            <person name="Isono Y."/>
            <person name="Nakamura Y."/>
            <person name="Nagahari K."/>
            <person name="Murakami K."/>
            <person name="Yasuda T."/>
            <person name="Iwayanagi T."/>
            <person name="Wagatsuma M."/>
            <person name="Shiratori A."/>
            <person name="Sudo H."/>
            <person name="Hosoiri T."/>
            <person name="Kaku Y."/>
            <person name="Kodaira H."/>
            <person name="Kondo H."/>
            <person name="Sugawara M."/>
            <person name="Takahashi M."/>
            <person name="Kanda K."/>
            <person name="Yokoi T."/>
            <person name="Furuya T."/>
            <person name="Kikkawa E."/>
            <person name="Omura Y."/>
            <person name="Abe K."/>
            <person name="Kamihara K."/>
            <person name="Katsuta N."/>
            <person name="Sato K."/>
            <person name="Tanikawa M."/>
            <person name="Yamazaki M."/>
            <person name="Ninomiya K."/>
            <person name="Ishibashi T."/>
            <person name="Yamashita H."/>
            <person name="Murakawa K."/>
            <person name="Fujimori K."/>
            <person name="Tanai H."/>
            <person name="Kimata M."/>
            <person name="Watanabe M."/>
            <person name="Hiraoka S."/>
            <person name="Chiba Y."/>
            <person name="Ishida S."/>
            <person name="Ono Y."/>
            <person name="Takiguchi S."/>
            <person name="Watanabe S."/>
            <person name="Yosida M."/>
            <person name="Hotuta T."/>
            <person name="Kusano J."/>
            <person name="Kanehori K."/>
            <person name="Takahashi-Fujii A."/>
            <person name="Hara H."/>
            <person name="Tanase T.-O."/>
            <person name="Nomura Y."/>
            <person name="Togiya S."/>
            <person name="Komai F."/>
            <person name="Hara R."/>
            <person name="Takeuchi K."/>
            <person name="Arita M."/>
            <person name="Imose N."/>
            <person name="Musashino K."/>
            <person name="Yuuki H."/>
            <person name="Oshima A."/>
            <person name="Sasaki N."/>
            <person name="Aotsuka S."/>
            <person name="Yoshikawa Y."/>
            <person name="Matsunawa H."/>
            <person name="Ichihara T."/>
            <person name="Shiohata N."/>
            <person name="Sano S."/>
            <person name="Moriya S."/>
            <person name="Momiyama H."/>
            <person name="Satoh N."/>
            <person name="Takami S."/>
            <person name="Terashima Y."/>
            <person name="Suzuki O."/>
            <person name="Nakagawa S."/>
            <person name="Senoh A."/>
            <person name="Mizoguchi H."/>
            <person name="Goto Y."/>
            <person name="Shimizu F."/>
            <person name="Wakebe H."/>
            <person name="Hishigaki H."/>
            <person name="Watanabe T."/>
            <person name="Sugiyama A."/>
            <person name="Takemoto M."/>
            <person name="Kawakami B."/>
            <person name="Yamazaki M."/>
            <person name="Watanabe K."/>
            <person name="Kumagai A."/>
            <person name="Itakura S."/>
            <person name="Fukuzumi Y."/>
            <person name="Fujimori Y."/>
            <person name="Komiyama M."/>
            <person name="Tashiro H."/>
            <person name="Tanigami A."/>
            <person name="Fujiwara T."/>
            <person name="Ono T."/>
            <person name="Yamada K."/>
            <person name="Fujii Y."/>
            <person name="Ozaki K."/>
            <person name="Hirao M."/>
            <person name="Ohmori Y."/>
            <person name="Kawabata A."/>
            <person name="Hikiji T."/>
            <person name="Kobatake N."/>
            <person name="Inagaki H."/>
            <person name="Ikema Y."/>
            <person name="Okamoto S."/>
            <person name="Okitani R."/>
            <person name="Kawakami T."/>
            <person name="Noguchi S."/>
            <person name="Itoh T."/>
            <person name="Shigeta K."/>
            <person name="Senba T."/>
            <person name="Matsumura K."/>
            <person name="Nakajima Y."/>
            <person name="Mizuno T."/>
            <person name="Morinaga M."/>
            <person name="Sasaki M."/>
            <person name="Togashi T."/>
            <person name="Oyama M."/>
            <person name="Hata H."/>
            <person name="Watanabe M."/>
            <person name="Komatsu T."/>
            <person name="Mizushima-Sugano J."/>
            <person name="Satoh T."/>
            <person name="Shirai Y."/>
            <person name="Takahashi Y."/>
            <person name="Nakagawa K."/>
            <person name="Okumura K."/>
            <person name="Nagase T."/>
            <person name="Nomura N."/>
            <person name="Kikuchi H."/>
            <person name="Masuho Y."/>
            <person name="Yamashita R."/>
            <person name="Nakai K."/>
            <person name="Yada T."/>
            <person name="Nakamura Y."/>
            <person name="Ohara O."/>
            <person name="Isogai T."/>
            <person name="Sugano S."/>
        </authorList>
    </citation>
    <scope>NUCLEOTIDE SEQUENCE [LARGE SCALE MRNA] (ISOFORM 3)</scope>
    <source>
        <tissue>Uterus</tissue>
    </source>
</reference>
<reference key="5">
    <citation type="submission" date="2004-05" db="EMBL/GenBank/DDBJ databases">
        <title>Cloning of human full open reading frames in Gateway(TM) system entry vector (pDONR201).</title>
        <authorList>
            <person name="Ebert L."/>
            <person name="Schick M."/>
            <person name="Neubert P."/>
            <person name="Schatten R."/>
            <person name="Henze S."/>
            <person name="Korn B."/>
        </authorList>
    </citation>
    <scope>NUCLEOTIDE SEQUENCE [LARGE SCALE MRNA] (ISOFORM 2)</scope>
</reference>
<reference key="6">
    <citation type="journal article" date="2004" name="Nature">
        <title>The DNA sequence and biology of human chromosome 19.</title>
        <authorList>
            <person name="Grimwood J."/>
            <person name="Gordon L.A."/>
            <person name="Olsen A.S."/>
            <person name="Terry A."/>
            <person name="Schmutz J."/>
            <person name="Lamerdin J.E."/>
            <person name="Hellsten U."/>
            <person name="Goodstein D."/>
            <person name="Couronne O."/>
            <person name="Tran-Gyamfi M."/>
            <person name="Aerts A."/>
            <person name="Altherr M."/>
            <person name="Ashworth L."/>
            <person name="Bajorek E."/>
            <person name="Black S."/>
            <person name="Branscomb E."/>
            <person name="Caenepeel S."/>
            <person name="Carrano A.V."/>
            <person name="Caoile C."/>
            <person name="Chan Y.M."/>
            <person name="Christensen M."/>
            <person name="Cleland C.A."/>
            <person name="Copeland A."/>
            <person name="Dalin E."/>
            <person name="Dehal P."/>
            <person name="Denys M."/>
            <person name="Detter J.C."/>
            <person name="Escobar J."/>
            <person name="Flowers D."/>
            <person name="Fotopulos D."/>
            <person name="Garcia C."/>
            <person name="Georgescu A.M."/>
            <person name="Glavina T."/>
            <person name="Gomez M."/>
            <person name="Gonzales E."/>
            <person name="Groza M."/>
            <person name="Hammon N."/>
            <person name="Hawkins T."/>
            <person name="Haydu L."/>
            <person name="Ho I."/>
            <person name="Huang W."/>
            <person name="Israni S."/>
            <person name="Jett J."/>
            <person name="Kadner K."/>
            <person name="Kimball H."/>
            <person name="Kobayashi A."/>
            <person name="Larionov V."/>
            <person name="Leem S.-H."/>
            <person name="Lopez F."/>
            <person name="Lou Y."/>
            <person name="Lowry S."/>
            <person name="Malfatti S."/>
            <person name="Martinez D."/>
            <person name="McCready P.M."/>
            <person name="Medina C."/>
            <person name="Morgan J."/>
            <person name="Nelson K."/>
            <person name="Nolan M."/>
            <person name="Ovcharenko I."/>
            <person name="Pitluck S."/>
            <person name="Pollard M."/>
            <person name="Popkie A.P."/>
            <person name="Predki P."/>
            <person name="Quan G."/>
            <person name="Ramirez L."/>
            <person name="Rash S."/>
            <person name="Retterer J."/>
            <person name="Rodriguez A."/>
            <person name="Rogers S."/>
            <person name="Salamov A."/>
            <person name="Salazar A."/>
            <person name="She X."/>
            <person name="Smith D."/>
            <person name="Slezak T."/>
            <person name="Solovyev V."/>
            <person name="Thayer N."/>
            <person name="Tice H."/>
            <person name="Tsai M."/>
            <person name="Ustaszewska A."/>
            <person name="Vo N."/>
            <person name="Wagner M."/>
            <person name="Wheeler J."/>
            <person name="Wu K."/>
            <person name="Xie G."/>
            <person name="Yang J."/>
            <person name="Dubchak I."/>
            <person name="Furey T.S."/>
            <person name="DeJong P."/>
            <person name="Dickson M."/>
            <person name="Gordon D."/>
            <person name="Eichler E.E."/>
            <person name="Pennacchio L.A."/>
            <person name="Richardson P."/>
            <person name="Stubbs L."/>
            <person name="Rokhsar D.S."/>
            <person name="Myers R.M."/>
            <person name="Rubin E.M."/>
            <person name="Lucas S.M."/>
        </authorList>
    </citation>
    <scope>NUCLEOTIDE SEQUENCE [LARGE SCALE GENOMIC DNA]</scope>
</reference>
<reference key="7">
    <citation type="submission" date="2005-07" db="EMBL/GenBank/DDBJ databases">
        <authorList>
            <person name="Mural R.J."/>
            <person name="Istrail S."/>
            <person name="Sutton G."/>
            <person name="Florea L."/>
            <person name="Halpern A.L."/>
            <person name="Mobarry C.M."/>
            <person name="Lippert R."/>
            <person name="Walenz B."/>
            <person name="Shatkay H."/>
            <person name="Dew I."/>
            <person name="Miller J.R."/>
            <person name="Flanigan M.J."/>
            <person name="Edwards N.J."/>
            <person name="Bolanos R."/>
            <person name="Fasulo D."/>
            <person name="Halldorsson B.V."/>
            <person name="Hannenhalli S."/>
            <person name="Turner R."/>
            <person name="Yooseph S."/>
            <person name="Lu F."/>
            <person name="Nusskern D.R."/>
            <person name="Shue B.C."/>
            <person name="Zheng X.H."/>
            <person name="Zhong F."/>
            <person name="Delcher A.L."/>
            <person name="Huson D.H."/>
            <person name="Kravitz S.A."/>
            <person name="Mouchard L."/>
            <person name="Reinert K."/>
            <person name="Remington K.A."/>
            <person name="Clark A.G."/>
            <person name="Waterman M.S."/>
            <person name="Eichler E.E."/>
            <person name="Adams M.D."/>
            <person name="Hunkapiller M.W."/>
            <person name="Myers E.W."/>
            <person name="Venter J.C."/>
        </authorList>
    </citation>
    <scope>NUCLEOTIDE SEQUENCE [LARGE SCALE GENOMIC DNA]</scope>
</reference>
<reference key="8">
    <citation type="journal article" date="2004" name="Genome Res.">
        <title>The status, quality, and expansion of the NIH full-length cDNA project: the Mammalian Gene Collection (MGC).</title>
        <authorList>
            <consortium name="The MGC Project Team"/>
        </authorList>
    </citation>
    <scope>NUCLEOTIDE SEQUENCE [LARGE SCALE MRNA] (ISOFORM 3)</scope>
    <source>
        <tissue>Lung</tissue>
    </source>
</reference>
<reference key="9">
    <citation type="journal article" date="2000" name="J. Biol. Chem.">
        <title>Protein-arginine methyltransferase I, the predominant protein-arginine methyltransferase in cells, interacts with and is regulated by interleukin enhancer-binding factor 3.</title>
        <authorList>
            <person name="Tang J."/>
            <person name="Kao P.N."/>
            <person name="Herschman H.R."/>
        </authorList>
    </citation>
    <scope>FUNCTION</scope>
    <scope>INTERACTION WITH ILF3</scope>
    <scope>SUBCELLULAR LOCATION</scope>
</reference>
<reference key="10">
    <citation type="journal article" date="2000" name="Nat. Struct. Biol.">
        <title>The structure and oligomerization of the yeast arginine methyltransferase, Hmt1.</title>
        <authorList>
            <person name="Weiss V.H."/>
            <person name="McBride A.E."/>
            <person name="Soriano M.A."/>
            <person name="Filman D.J."/>
            <person name="Silver P.A."/>
            <person name="Hogle J.M."/>
        </authorList>
    </citation>
    <scope>SUBUNIT</scope>
</reference>
<reference key="11">
    <citation type="journal article" date="2001" name="Curr. Biol.">
        <title>Methylation of histone H4 at arginine 3 occurs in vivo and is mediated by the nuclear receptor coactivator PRMT1.</title>
        <authorList>
            <person name="Strahl B.D."/>
            <person name="Briggs S.D."/>
            <person name="Brame C.J."/>
            <person name="Caldwell J.A."/>
            <person name="Koh S.S."/>
            <person name="Ma H."/>
            <person name="Cook R.G."/>
            <person name="Shabanowitz J."/>
            <person name="Hunt D.F."/>
            <person name="Stallcup M.R."/>
            <person name="Allis C.D."/>
        </authorList>
    </citation>
    <scope>FUNCTION IN METHYLATION OF HISTONE H4</scope>
    <scope>CATALYTIC ACTIVITY</scope>
</reference>
<reference key="12">
    <citation type="journal article" date="2001" name="Science">
        <title>Methylation of histone H4 at arginine 3 facilitating transcriptional activation by nuclear hormone receptor.</title>
        <authorList>
            <person name="Wang H."/>
            <person name="Huang Z.-Q."/>
            <person name="Xia L."/>
            <person name="Feng Q."/>
            <person name="Erdjument-Bromage H."/>
            <person name="Strahl B.D."/>
            <person name="Briggs S.D."/>
            <person name="Allis C.D."/>
            <person name="Wong J."/>
            <person name="Tempst P."/>
            <person name="Zhang Y."/>
        </authorList>
    </citation>
    <scope>FUNCTION IN METHYLATION OF HISTONE H4</scope>
    <scope>CATALYTIC ACTIVITY</scope>
    <scope>SUBCELLULAR LOCATION</scope>
</reference>
<reference key="13">
    <citation type="journal article" date="2003" name="Mol. Cell">
        <title>Methylation of SPT5 regulates its interaction with RNA polymerase II and transcriptional elongation properties.</title>
        <authorList>
            <person name="Kwak Y.T."/>
            <person name="Guo J."/>
            <person name="Prajapati S."/>
            <person name="Park K.-J."/>
            <person name="Surabhi R.M."/>
            <person name="Miller B."/>
            <person name="Gehrig P."/>
            <person name="Gaynor R.B."/>
        </authorList>
    </citation>
    <scope>FUNCTION</scope>
    <scope>INTERACTION WITH SUPT5H</scope>
</reference>
<reference key="14">
    <citation type="journal article" date="2004" name="J. Biol. Chem.">
        <title>Arginine methylation of RNA helicase a determines its subcellular localization.</title>
        <authorList>
            <person name="Smith W.A."/>
            <person name="Schurter B.T."/>
            <person name="Wong-Staal F."/>
            <person name="David M."/>
        </authorList>
    </citation>
    <scope>INTERACTION WITH DHX9</scope>
</reference>
<reference key="15">
    <citation type="journal article" date="2005" name="Cell Cycle">
        <title>The GAR motif of 53BP1 is arginine methylated by PRMT1 and is necessary for 53BP1 DNA binding activity.</title>
        <authorList>
            <person name="Boisvert F.-M."/>
            <person name="Rhie A."/>
            <person name="Richard S."/>
            <person name="Doherty A.J."/>
        </authorList>
    </citation>
    <scope>FUNCTION</scope>
</reference>
<reference key="16">
    <citation type="journal article" date="2005" name="Genes Dev.">
        <title>Arginine methylation of MRE11 by PRMT1 is required for DNA damage checkpoint control.</title>
        <authorList>
            <person name="Boisvert F.M."/>
            <person name="Dery U."/>
            <person name="Masson J.Y."/>
            <person name="Richard S."/>
        </authorList>
    </citation>
    <scope>FUNCTION</scope>
    <scope>CATALYTIC ACTIVITY</scope>
</reference>
<reference key="17">
    <citation type="journal article" date="2006" name="FEBS J.">
        <title>Ki-1/57 interacts with PRMT1 and is a substrate for arginine methylation.</title>
        <authorList>
            <person name="Passos D.O."/>
            <person name="Bressan G.C."/>
            <person name="Nery F.C."/>
            <person name="Kobarg J."/>
        </authorList>
    </citation>
    <scope>FUNCTION IN METHYLATION OF HABP4 AND SERBP1</scope>
    <scope>SUBUNIT</scope>
    <scope>INTERACTION WITH HABP4</scope>
    <scope>SUBCELLULAR LOCATION</scope>
</reference>
<reference key="18">
    <citation type="journal article" date="2008" name="Mol. Cell">
        <title>Regulation of estrogen rapid signaling through arginine methylation by PRMT1.</title>
        <authorList>
            <person name="Le Romancer M."/>
            <person name="Treilleux I."/>
            <person name="Leconte N."/>
            <person name="Robin-Lespinasse Y."/>
            <person name="Sentis S."/>
            <person name="Bouchekioua-Bouzaghou K."/>
            <person name="Goddard S."/>
            <person name="Gobert-Gosse S."/>
            <person name="Corbo L."/>
        </authorList>
    </citation>
    <scope>FUNCTION</scope>
</reference>
<reference key="19">
    <citation type="journal article" date="2008" name="Mol. Cell">
        <title>Arginine methylation of FOXO transcription factors inhibits their phosphorylation by Akt.</title>
        <authorList>
            <person name="Yamagata K."/>
            <person name="Daitoku H."/>
            <person name="Takahashi Y."/>
            <person name="Namiki K."/>
            <person name="Hisatake K."/>
            <person name="Kako K."/>
            <person name="Mukai H."/>
            <person name="Kasuya Y."/>
            <person name="Fukamizu A."/>
        </authorList>
    </citation>
    <scope>FUNCTION</scope>
    <scope>INTERACTION WITH FOXO1</scope>
    <scope>MUTAGENESIS OF VAL-92; LEU-93 AND ASP-94</scope>
</reference>
<reference key="20">
    <citation type="journal article" date="2008" name="Neurosci. Lett.">
        <title>PRMT1 and Btg2 regulates neurite outgrowth of Neuro2a cells.</title>
        <authorList>
            <person name="Miyata S."/>
            <person name="Mori Y."/>
            <person name="Tohyama M."/>
        </authorList>
    </citation>
    <scope>FUNCTION</scope>
</reference>
<reference key="21">
    <citation type="journal article" date="2008" name="Proteins">
        <title>Identification of proteins interacting with protein arginine methyltransferase 8: the Ewing sarcoma (EWS) protein binds independent of its methylation state.</title>
        <authorList>
            <person name="Pahlich S."/>
            <person name="Zakaryan R.P."/>
            <person name="Gehring H."/>
        </authorList>
    </citation>
    <scope>FUNCTION</scope>
    <scope>INTERACTION WITH EWS AND PRMT8</scope>
</reference>
<reference key="22">
    <citation type="journal article" date="2009" name="Exp. Cell Res.">
        <title>PRMT1 mediated methylation of TAF15 is required for its positive gene regulatory function.</title>
        <authorList>
            <person name="Jobert L."/>
            <person name="Argentini M."/>
            <person name="Tora L."/>
        </authorList>
    </citation>
    <scope>FUNCTION</scope>
</reference>
<reference key="23">
    <citation type="journal article" date="2009" name="Genes Dev.">
        <title>PRMT1-mediated arginine methylation of PIAS1 regulates STAT1 signaling.</title>
        <authorList>
            <person name="Weber S."/>
            <person name="Maass F."/>
            <person name="Schuemann M."/>
            <person name="Krause E."/>
            <person name="Suske G."/>
            <person name="Bauer U.M."/>
        </authorList>
    </citation>
    <scope>RETRACTED PAPER</scope>
</reference>
<reference key="24">
    <citation type="journal article" date="2011" name="Genes Dev.">
        <title>Retraction. PRMT1-mediated arginine methylation of PIAS1 regulates STAT1 signaling.</title>
        <authorList>
            <person name="Weber S."/>
            <person name="Maass F."/>
            <person name="Schuemann M."/>
            <person name="Krause E."/>
            <person name="Suske G."/>
            <person name="Bauer U.M."/>
        </authorList>
    </citation>
    <scope>RETRACTION NOTICE OF PUBMED:19136629</scope>
</reference>
<reference key="25">
    <citation type="journal article" date="2010" name="J. Biol. Chem.">
        <title>Protein-arginine methyltransferase 1 suppresses megakaryocytic differentiation via modulation of the p38 MAPK pathway in K562 cells.</title>
        <authorList>
            <person name="Chang Y.I."/>
            <person name="Hua W.K."/>
            <person name="Yao C.L."/>
            <person name="Hwang S.M."/>
            <person name="Hung Y.C."/>
            <person name="Kuan C.J."/>
            <person name="Leou J.S."/>
            <person name="Lin W.J."/>
        </authorList>
    </citation>
    <scope>FUNCTION</scope>
</reference>
<reference key="26">
    <citation type="journal article" date="2011" name="BMC Syst. Biol.">
        <title>Initial characterization of the human central proteome.</title>
        <authorList>
            <person name="Burkard T.R."/>
            <person name="Planyavsky M."/>
            <person name="Kaupe I."/>
            <person name="Breitwieser F.P."/>
            <person name="Buerckstuemmer T."/>
            <person name="Bennett K.L."/>
            <person name="Superti-Furga G."/>
            <person name="Colinge J."/>
        </authorList>
    </citation>
    <scope>IDENTIFICATION BY MASS SPECTROMETRY [LARGE SCALE ANALYSIS]</scope>
</reference>
<reference key="27">
    <citation type="journal article" date="2012" name="Cell Death Differ.">
        <title>Arginine methylation-dependent regulation of ASK1 signaling by PRMT1.</title>
        <authorList>
            <person name="Cho J.H."/>
            <person name="Lee M.K."/>
            <person name="Yoon K.W."/>
            <person name="Lee J."/>
            <person name="Cho S.G."/>
            <person name="Choi E.J."/>
        </authorList>
    </citation>
    <scope>FUNCTION</scope>
    <scope>CATALYTIC ACTIVITY</scope>
    <scope>INTERACTION WITH MAP3K5</scope>
</reference>
<reference key="28">
    <citation type="journal article" date="2013" name="J. Proteome Res.">
        <title>Toward a comprehensive characterization of a human cancer cell phosphoproteome.</title>
        <authorList>
            <person name="Zhou H."/>
            <person name="Di Palma S."/>
            <person name="Preisinger C."/>
            <person name="Peng M."/>
            <person name="Polat A.N."/>
            <person name="Heck A.J."/>
            <person name="Mohammed S."/>
        </authorList>
    </citation>
    <scope>PHOSPHORYLATION [LARGE SCALE ANALYSIS] AT SER-304 AND SER-307</scope>
    <scope>IDENTIFICATION BY MASS SPECTROMETRY [LARGE SCALE ANALYSIS]</scope>
    <source>
        <tissue>Cervix carcinoma</tissue>
        <tissue>Erythroleukemia</tissue>
    </source>
</reference>
<reference key="29">
    <citation type="journal article" date="2014" name="Cell Rep.">
        <title>5-Hydroxymethylcytosine plays a critical role in glioblastomagenesis by recruiting the CHTOP-methylosome complex.</title>
        <authorList>
            <person name="Takai H."/>
            <person name="Masuda K."/>
            <person name="Sato T."/>
            <person name="Sakaguchi Y."/>
            <person name="Suzuki T."/>
            <person name="Suzuki T."/>
            <person name="Koyama-Nasu R."/>
            <person name="Nasu-Nishimura Y."/>
            <person name="Katou Y."/>
            <person name="Ogawa H."/>
            <person name="Morishita Y."/>
            <person name="Kozuka-Hata H."/>
            <person name="Oyama M."/>
            <person name="Todo T."/>
            <person name="Ino Y."/>
            <person name="Mukasa A."/>
            <person name="Saito N."/>
            <person name="Toyoshima C."/>
            <person name="Shirahige K."/>
            <person name="Akiyama T."/>
        </authorList>
    </citation>
    <scope>FUNCTION</scope>
    <scope>INTERACTION WITH CHTOP</scope>
    <scope>IDENTIFICATION IN THE METHYLOSOME COMPLEX WITH PRMT5; WRD77 AND ERH</scope>
</reference>
<reference key="30">
    <citation type="journal article" date="2015" name="Elife">
        <title>Cross-talk between PRMT1-mediated methylation and ubiquitylation on RBM15 controls RNA splicing.</title>
        <authorList>
            <person name="Zhang L."/>
            <person name="Tran N.T."/>
            <person name="Su H."/>
            <person name="Wang R."/>
            <person name="Lu Y."/>
            <person name="Tang H."/>
            <person name="Aoyagi S."/>
            <person name="Guo A."/>
            <person name="Khodadadi-Jamayran A."/>
            <person name="Zhou D."/>
            <person name="Qian K."/>
            <person name="Hricik T."/>
            <person name="Cote J."/>
            <person name="Han X."/>
            <person name="Zhou W."/>
            <person name="Laha S."/>
            <person name="Abdel-Wahab O."/>
            <person name="Levine R.L."/>
            <person name="Raffel G."/>
            <person name="Liu Y."/>
            <person name="Chen D."/>
            <person name="Li H."/>
            <person name="Townes T."/>
            <person name="Wang H."/>
            <person name="Deng H."/>
            <person name="Zheng Y.G."/>
            <person name="Leslie C."/>
            <person name="Luo M."/>
            <person name="Zhao X."/>
        </authorList>
    </citation>
    <scope>FUNCTION</scope>
    <scope>CATALYTIC ACTIVITY</scope>
</reference>
<reference key="31">
    <citation type="journal article" date="2015" name="Exp. Cell Res.">
        <title>PRMT1-mediated arginine methylation controls ATXN2L localization.</title>
        <authorList>
            <person name="Kaehler C."/>
            <person name="Guenther A."/>
            <person name="Uhlich A."/>
            <person name="Krobitsch S."/>
        </authorList>
    </citation>
    <scope>INTERACTION WITH ATXN2L</scope>
</reference>
<reference key="32">
    <citation type="journal article" date="2016" name="J. Mol. Biol.">
        <title>Novel helical assembly in arginine methyltransferase 8.</title>
        <authorList>
            <person name="Toma-Fukai S."/>
            <person name="Kim J.D."/>
            <person name="Park K.E."/>
            <person name="Kuwabara N."/>
            <person name="Shimizu N."/>
            <person name="Krayukhina E."/>
            <person name="Uchiyama S."/>
            <person name="Fukamizu A."/>
            <person name="Shimizu T."/>
        </authorList>
    </citation>
    <scope>FUNCTION</scope>
    <scope>SUBUNIT</scope>
    <scope>SUBCELLULAR LOCATION</scope>
    <scope>S-ADENOSYL-L-METHIONINE-BINDING</scope>
    <scope>MUTAGENESIS OF TYR-280; TYR-322 AND LEU-359</scope>
</reference>
<reference key="33">
    <citation type="journal article" date="2016" name="Nat. Commun.">
        <title>PRMT1-mediated methylation of MICU1 determines the UCP2/3 dependency of mitochondrial Ca(2+) uptake in immortalized cells.</title>
        <authorList>
            <person name="Madreiter-Sokolowski C.T."/>
            <person name="Klec C."/>
            <person name="Parichatikanond W."/>
            <person name="Stryeck S."/>
            <person name="Gottschalk B."/>
            <person name="Pulido S."/>
            <person name="Rost R."/>
            <person name="Eroglu E."/>
            <person name="Hofmann N.A."/>
            <person name="Bondarenko A.I."/>
            <person name="Madl T."/>
            <person name="Waldeck-Weiermair M."/>
            <person name="Malli R."/>
            <person name="Graier W.F."/>
        </authorList>
    </citation>
    <scope>FUNCTION</scope>
    <scope>CATALYTIC ACTIVITY</scope>
</reference>
<reference key="34">
    <citation type="journal article" date="2017" name="Cell Rep.">
        <title>TRIM48 Promotes ASK1 Activation and Cell Death through Ubiquitination-Dependent Degradation of the ASK1-Negative Regulator PRMT1.</title>
        <authorList>
            <person name="Hirata Y."/>
            <person name="Katagiri K."/>
            <person name="Nagaoka K."/>
            <person name="Morishita T."/>
            <person name="Kudoh Y."/>
            <person name="Hatta T."/>
            <person name="Naguro I."/>
            <person name="Kano K."/>
            <person name="Udagawa T."/>
            <person name="Natsume T."/>
            <person name="Aoki J."/>
            <person name="Inada T."/>
            <person name="Noguchi T."/>
            <person name="Ichijo H."/>
            <person name="Matsuzawa A."/>
        </authorList>
    </citation>
    <scope>INTERACTION WITH TRIM48</scope>
    <scope>UBIQUITINATION</scope>
</reference>
<reference key="35">
    <citation type="journal article" date="2017" name="Int. J. Biochem. Cell Biol.">
        <title>FAM98A associates with DDX1-C14orf166-FAM98B in a novel complex involved in colorectal cancer progression.</title>
        <authorList>
            <person name="Akter K.A."/>
            <person name="Mansour M.A."/>
            <person name="Hyodo T."/>
            <person name="Senga T."/>
        </authorList>
    </citation>
    <scope>FUNCTION</scope>
    <scope>CATALYTIC ACTIVITY</scope>
    <scope>TISSUE SPECIFICITY</scope>
</reference>
<reference key="36">
    <citation type="journal article" date="2018" name="Nat. Commun.">
        <title>GFI1 facilitates efficient DNA repair by regulating PRMT1 dependent methylation of MRE11 and 53BP1.</title>
        <authorList>
            <person name="Vadnais C."/>
            <person name="Chen R."/>
            <person name="Fraszczak J."/>
            <person name="Yu Z."/>
            <person name="Boulais J."/>
            <person name="Pinder J."/>
            <person name="Frank D."/>
            <person name="Khandanpour C."/>
            <person name="Hebert J."/>
            <person name="Dellaire G."/>
            <person name="Cote J.F."/>
            <person name="Richard S."/>
            <person name="Orthwein A."/>
            <person name="Drobetsky E."/>
            <person name="Moeroey T."/>
        </authorList>
    </citation>
    <scope>FUNCTION</scope>
    <scope>INTERACTION WITH GFI1</scope>
</reference>
<reference key="37">
    <citation type="journal article" date="2019" name="Proc. Natl. Acad. Sci. U.S.A.">
        <title>Phosphoregulated FMRP phase separation models activity-dependent translation through bidirectional control of mRNA granule formation.</title>
        <authorList>
            <person name="Tsang B."/>
            <person name="Arsenault J."/>
            <person name="Vernon R.M."/>
            <person name="Lin H."/>
            <person name="Sonenberg N."/>
            <person name="Wang L.Y."/>
            <person name="Bah A."/>
            <person name="Forman-Kay J.D."/>
        </authorList>
    </citation>
    <scope>FUNCTION</scope>
</reference>
<reference key="38">
    <citation type="journal article" date="2023" name="Cell Metab.">
        <title>PRMT1 orchestrates with SAMTOR to govern mTORC1 methionine sensing via Arg-methylation of NPRL2.</title>
        <authorList>
            <person name="Jiang C."/>
            <person name="Liu J."/>
            <person name="He S."/>
            <person name="Xu W."/>
            <person name="Huang R."/>
            <person name="Pan W."/>
            <person name="Li X."/>
            <person name="Dai X."/>
            <person name="Guo J."/>
            <person name="Zhang T."/>
            <person name="Inuzuka H."/>
            <person name="Wang P."/>
            <person name="Asara J.M."/>
            <person name="Xiao J."/>
            <person name="Wei W."/>
        </authorList>
    </citation>
    <scope>FUNCTION</scope>
    <scope>CATALYTIC ACTIVITY</scope>
    <scope>BIOPHYSICOCHEMICAL PROPERTIES</scope>
    <scope>SUBCELLULAR LOCATION</scope>
    <scope>INTERACTION WITH GATOR1 COMPLEX</scope>
    <scope>MUTAGENESIS OF GLY-98 AND GLU-162</scope>
</reference>
<reference evidence="43" key="39">
    <citation type="journal article" date="2019" name="Cancer Cell">
        <title>Anti-tumor Activity of the Type I PRMT Inhibitor, GSK3368715, Synergizes with PRMT5 Inhibition through MTAP Loss.</title>
        <authorList>
            <person name="Fedoriw A."/>
            <person name="Rajapurkar S.R."/>
            <person name="O'Brien S."/>
            <person name="Gerhart S.V."/>
            <person name="Mitchell L.H."/>
            <person name="Adams N.D."/>
            <person name="Rioux N."/>
            <person name="Lingaraj T."/>
            <person name="Ribich S.A."/>
            <person name="Pappalardi M.B."/>
            <person name="Shah N."/>
            <person name="Laraio J."/>
            <person name="Liu Y."/>
            <person name="Butticello M."/>
            <person name="Carpenter C.L."/>
            <person name="Creasy C."/>
            <person name="Korenchuk S."/>
            <person name="McCabe M.T."/>
            <person name="McHugh C.F."/>
            <person name="Nagarajan R."/>
            <person name="Wagner C."/>
            <person name="Zappacosta F."/>
            <person name="Annan R."/>
            <person name="Concha N.O."/>
            <person name="Thomas R.A."/>
            <person name="Hart T.K."/>
            <person name="Smith J.J."/>
            <person name="Copeland R.A."/>
            <person name="Moyer M.P."/>
            <person name="Campbell J."/>
            <person name="Stickland K."/>
            <person name="Mills J."/>
            <person name="Jacques-O'Hagan S."/>
            <person name="Allain C."/>
            <person name="Johnston D."/>
            <person name="Raimondi A."/>
            <person name="Porter Scott M."/>
            <person name="Waters N."/>
            <person name="Swinger K."/>
            <person name="Boriack-Sjodin A."/>
            <person name="Riera T."/>
            <person name="Shapiro G."/>
            <person name="Chesworth R."/>
            <person name="Prinjha R.K."/>
            <person name="Kruger R.G."/>
            <person name="Barbash O."/>
            <person name="Mohammad H.P."/>
        </authorList>
    </citation>
    <scope>X-RAY CRYSTALLOGRAPHY (2.48 ANGSTROMS) IN COMPLEX WITH S-ADENOSYL-L-HOMOCYSTEINE</scope>
    <scope>FUNCTION</scope>
    <scope>CATALYTIC ACTIVITY</scope>
</reference>
<protein>
    <recommendedName>
        <fullName evidence="37">Protein arginine N-methyltransferase 1</fullName>
        <ecNumber evidence="7 8 20 23 26 31">2.1.1.319</ecNumber>
    </recommendedName>
    <alternativeName>
        <fullName>Histone-arginine N-methyltransferase PRMT1</fullName>
    </alternativeName>
    <alternativeName>
        <fullName>Interferon receptor 1-bound protein 4</fullName>
    </alternativeName>
</protein>
<name>ANM1_HUMAN</name>
<accession>Q99873</accession>
<accession>A0A087X1W2</accession>
<accession>B4E3C3</accession>
<accession>G5E9B6</accession>
<accession>H7C2I1</accession>
<accession>Q15529</accession>
<accession>Q2VP93</accession>
<accession>Q6LEU5</accession>
<accession>Q8WUW5</accession>
<accession>Q99872</accession>
<accession>Q99874</accession>
<accession>Q9NZ04</accession>
<accession>Q9NZ05</accession>
<accession>Q9NZ06</accession>
<organism>
    <name type="scientific">Homo sapiens</name>
    <name type="common">Human</name>
    <dbReference type="NCBI Taxonomy" id="9606"/>
    <lineage>
        <taxon>Eukaryota</taxon>
        <taxon>Metazoa</taxon>
        <taxon>Chordata</taxon>
        <taxon>Craniata</taxon>
        <taxon>Vertebrata</taxon>
        <taxon>Euteleostomi</taxon>
        <taxon>Mammalia</taxon>
        <taxon>Eutheria</taxon>
        <taxon>Euarchontoglires</taxon>
        <taxon>Primates</taxon>
        <taxon>Haplorrhini</taxon>
        <taxon>Catarrhini</taxon>
        <taxon>Hominidae</taxon>
        <taxon>Homo</taxon>
    </lineage>
</organism>
<sequence>MAAAEAANCIMENFVATLANGMSLQPPLEEVSCGQAESSEKPNAEDMTSKDYYFDSYAHFGIHEEMLKDEVRTLTYRNSMFHNRHLFKDKVVLDVGSGTGILCMFAAKAGARKVIGIECSSISDYAVKIVKANKLDHVVTIIKGKVEEVELPVEKVDIIISEWMGYCLFYESMLNTVLYARDKWLAPDGLIFPDRATLYVTAIEDRQYKDYKIHWWENVYGFDMSCIKDVAIKEPLVDVVDPKQLVTNACLIKEVDIYTVKVEDLTFTSPFCLQVKRNDYVHALVAYFNIEFTRCHKRTGFSTSPESPYTHWKQTVFYMEDYLTVKTGEEIFGTIGMRPNAKNNRDLDFTIDLDFKGQLCELSCSTDYRMR</sequence>